<gene>
    <name type="primary">Sirt1</name>
    <name type="synonym">Sir2l1</name>
</gene>
<keyword id="KW-0007">Acetylation</keyword>
<keyword id="KW-0025">Alternative splicing</keyword>
<keyword id="KW-0053">Apoptosis</keyword>
<keyword id="KW-0090">Biological rhythms</keyword>
<keyword id="KW-0963">Cytoplasm</keyword>
<keyword id="KW-0217">Developmental protein</keyword>
<keyword id="KW-0221">Differentiation</keyword>
<keyword id="KW-0479">Metal-binding</keyword>
<keyword id="KW-0496">Mitochondrion</keyword>
<keyword id="KW-0517">Myogenesis</keyword>
<keyword id="KW-0520">NAD</keyword>
<keyword id="KW-0539">Nucleus</keyword>
<keyword id="KW-0597">Phosphoprotein</keyword>
<keyword id="KW-1185">Reference proteome</keyword>
<keyword id="KW-0702">S-nitrosylation</keyword>
<keyword id="KW-0804">Transcription</keyword>
<keyword id="KW-0805">Transcription regulation</keyword>
<keyword id="KW-0808">Transferase</keyword>
<keyword id="KW-0832">Ubl conjugation</keyword>
<keyword id="KW-0862">Zinc</keyword>
<comment type="function">
    <text evidence="3 6 7 9 10 11 12 13 14 15 16 17 18 21 22 23 24 26 27 28 29 30 32 33 34 35 36 38 39 40 43 44 46 49 50 51 52 54 55 56 58 60 61">NAD-dependent protein deacetylase that links transcriptional regulation directly to intracellular energetics and participates in the coordination of several separated cellular functions such as cell cycle, response to DNA damage, metabolism, apoptosis and autophagy (PubMed:11250901, PubMed:11672522, PubMed:12651913, PubMed:12887892, PubMed:12960381, PubMed:15175761, PubMed:15220471, PubMed:15632193, PubMed:15744310, PubMed:15788402, PubMed:16098828, PubMed:16366736, PubMed:16790548, PubMed:16892051, PubMed:17098745, PubMed:17347648, PubMed:17620057, PubMed:17901049, PubMed:17936707, PubMed:18004385, PubMed:18296641, PubMed:18371449, PubMed:18477450, PubMed:18662546, PubMed:18662547, PubMed:18687677, PubMed:19299583, PubMed:19356714, PubMed:20167603, PubMed:20817729, PubMed:21176092, PubMed:21187328, PubMed:21189328, PubMed:21622680, PubMed:23160044, PubMed:28883095). Can modulate chromatin function through deacetylation of histones and can promote alterations in the methylation of histones and DNA, leading to transcriptional repression (By similarity). Deacetylates a broad range of transcription factors and coregulators, thereby regulating target gene expression positively and negatively (By similarity). Serves as a sensor of the cytosolic ratio of NAD(+)/NADH which is altered by glucose deprivation and metabolic changes associated with caloric restriction (By similarity). Is essential in skeletal muscle cell differentiation and in response to low nutrients mediates the inhibitory effect on skeletal myoblast differentiation which also involves 5'-AMP-activated protein kinase (AMPK) and nicotinamide phosphoribosyltransferase (NAMPT) (PubMed:12887892, PubMed:18477450). Component of the eNoSC (energy-dependent nucleolar silencing) complex, a complex that mediates silencing of rDNA in response to intracellular energy status and acts by recruiting histone-modifying enzymes (By similarity). The eNoSC complex is able to sense the energy status of cell: upon glucose starvation, elevation of NAD(+)/NADP(+) ratio activates SIRT1, leading to histone H3 deacetylation followed by dimethylation of H3 at 'Lys-9' (H3K9me2) by SUV39H1 and the formation of silent chromatin in the rDNA locus (PubMed:18004385). Deacetylates 'Lys-266' of SUV39H1, leading to its activation (By similarity). Inhibits skeletal muscle differentiation by deacetylating PCAF and MYOD1 (PubMed:12887892). Deacetylates H2A and 'Lys-26' of H1-4 (By similarity). Deacetylates 'Lys-16' of histone H4 (in vitro) (By similarity). Involved in NR0B2/SHP corepression function through chromatin remodeling: Recruited to LRH1 target gene promoters by NR0B2/SHP thereby stimulating histone H3 and H4 deacetylation leading to transcriptional repression (By similarity). Proposed to contribute to genomic integrity via positive regulation of telomere length; however, reports on localization to pericentromeric heterochromatin are conflicting (PubMed:21187328). Proposed to play a role in constitutive heterochromatin (CH) formation and/or maintenance through regulation of the available pool of nuclear SUV39H1 (By similarity). Upon oxidative/metabolic stress decreases SUV39H1 degradation by inhibiting SUV39H1 polyubiquitination by MDM2 (By similarity). This increase in SUV39H1 levels enhances SUV39H1 turnover in CH, which in turn seems to accelerate renewal of the heterochromatin which correlates with greater genomic integrity during stress response (By similarity). Deacetylates 'Lys-382' of p53/TP53 and impairs its ability to induce transcription-dependent proapoptotic program and modulate cell senescence (PubMed:11672522, PubMed:12960381). Deacetylates TAF1B and thereby represses rDNA transcription by the RNA polymerase I (PubMed:11250901). Deacetylates MYC, promotes the association of MYC with MAX and decreases MYC stability leading to compromised transformational capability (By similarity). Deacetylates FOXO3 in response to oxidative stress thereby increasing its ability to induce cell cycle arrest and resistance to oxidative stress but inhibiting FOXO3-mediated induction of apoptosis transcriptional activity; also leading to FOXO3 ubiquitination and protesomal degradation (By similarity). Appears to have a similar effect on MLLT7/FOXO4 in regulation of transcriptional activity and apoptosis (By similarity). Deacetylates DNMT1; thereby impairs DNMT1 methyltransferase-independent transcription repressor activity, modulates DNMT1 cell cycle regulatory function and DNMT1-mediated gene silencing (By similarity). Deacetylates RELA/NF-kappa-B p65 thereby inhibiting its transactivating potential and augments apoptosis in response to TNF-alpha (By similarity). Deacetylates HIF1A, KAT5/TIP60, RB1 and HIC1 (PubMed:17620057). Deacetylates FOXO1, which increases its DNA binding ability and enhances its transcriptional activity leading to increased gluconeogenesis in liver (PubMed:15220471, PubMed:15788402). Inhibits E2F1 transcriptional activity and apoptotic function, possibly by deacetylation (PubMed:16892051). Involved in HES1- and HEY2-mediated transcriptional repression (By similarity). In cooperation with MYCN seems to be involved in transcriptional repression of DUSP6/MAPK3 leading to MYCN stabilization by phosphorylation at 'Ser-62' (By similarity). Deacetylates MEF2D (By similarity). Required for antagonist-mediated transcription suppression of AR-dependent genes which may be linked to local deacetylation of histone H3 (By similarity). Represses HNF1A-mediated transcription (PubMed:21176092). Required for the repression of ESRRG by CREBZF (By similarity). Deacetylates NR1H3 and NR1H2 and deacetylation of NR1H3 at 'Lys-434' positively regulates transcription of NR1H3:RXR target genes, promotes NR1H3 proteasomal degradation and results in cholesterol efflux; a promoter clearing mechanism after reach round of transcription is proposed (PubMed:17936707). Involved in lipid metabolism: deacetylates LPIN1, thereby inhibiting diacylglycerol synthesis (By similarity). Implicated in regulation of adipogenesis and fat mobilization in white adipocytes by repression of PPARG which probably involves association with NCOR1 and SMRT/NCOR2 (PubMed:15175761). Deacetylates p300/EP300 and PRMT1 (PubMed:15632193, PubMed:28883095). Deacetylates ACSS2 leading to its activation, and HMGCS1 deacetylation (PubMed:16790548). Involved in liver and muscle metabolism (By similarity). Through deacetylation and activation of PPARGC1A is required to activate fatty acid oxidation in skeletal muscle under low-glucose conditions and is involved in glucose homeostasis (PubMed:15716268, PubMed:15744310, PubMed:17347648, PubMed:23142079). Involved in regulation of PPARA and fatty acid beta-oxidation in liver (PubMed:19356714). Involved in positive regulation of insulin secretion in pancreatic beta cells in response to glucose; the function seems to imply transcriptional repression of UCP2 (PubMed:16098828, PubMed:16366736, PubMed:17901049). Proposed to deacetylate IRS2 thereby facilitating its insulin-induced tyrosine phosphorylation (PubMed:17901049). Deacetylates SREBF1 isoform SREBP-1C thereby decreasing its stability and transactivation in lipogenic gene expression (By similarity). Involved in DNA damage response by repressing genes which are involved in DNA repair, such as XPC and TP73, deacetylating XRCC6/Ku70, and facilitating recruitment of additional factors to sites of damaged DNA, such as SIRT1-deacetylated NBN can recruit ATM to initiate DNA repair and SIRT1-deacetylated XPA interacts with RPA2 (By similarity). Also involved in DNA repair of DNA double-strand breaks by homologous recombination and specifically single-strand annealing independently of XRCC6/Ku70 and NBN (By similarity). Promotes DNA double-strand breaks by mediating deacetylation of SIRT6 (By similarity). Transcriptional suppression of XPC probably involves an E2F4:RBL2 suppressor complex and protein kinase B (AKT) signaling (By similarity). Transcriptional suppression of TP73 probably involves E2F4 and PCAF (By similarity). Deacetylates WRN thereby regulating its helicase and exonuclease activities and regulates WRN nuclear translocation in response to DNA damage (By similarity). Deacetylates APEX1 at 'Lys-6' and 'Lys-7' and stimulates cellular AP endonuclease activity by promoting the association of APEX1 to XRCC1 (By similarity). Catalyzes deacetylation of ERCC4/XPF, thereby impairing interaction with ERCC1 and nucleotide excision repair (NER) (By similarity). Increases p53/TP53-mediated transcription-independent apoptosis by blocking nuclear translocation of cytoplasmic p53/TP53 and probably redirecting it to mitochondria (By similarity). Deacetylates XRCC6/Ku70 at 'Lys-537' and 'Lys-540' causing it to sequester BAX away from mitochondria thereby inhibiting stress-induced apoptosis (By similarity). Is involved in autophagy, presumably by deacetylating ATG5, ATG7 and MAP1LC3B/ATG8 (PubMed:18296641, PubMed:21189328). Deacetylates AKT1 which leads to enhanced binding of AKT1 and PDK1 to PIP3 and promotes their activation (By similarity). Proposed to play role in regulation of STK11/LBK1-dependent AMPK signaling pathways implicated in cellular senescence which seems to involve the regulation of the acetylation status of STK11/LBK1 (PubMed:18687677). Can deacetylate STK11/LBK1 and thereby increase its activity, cytoplasmic localization and association with STRAD; however, the relevance of such activity in normal cells is unclear (By similarity). In endothelial cells is shown to inhibit STK11/LBK1 activity and to promote its degradation (By similarity). Deacetylates SMAD7 at 'Lys-64' and 'Lys-70' thereby promoting its degradation (PubMed:17098745). Deacetylates CIITA and augments its MHC class II transactivation and contributes to its stability (By similarity). Deacetylates MECOM/EVI1 (By similarity). Deacetylates PML at 'Lys-487' and this deacetylation promotes PML control of PER2 nuclear localization (By similarity). During the neurogenic transition, represses selective NOTCH1-target genes through histone deacetylation in a BCL6-dependent manner and leading to neuronal differentiation (By similarity). Regulates the circadian expression of several core clock genes, including BMAL1, RORC, PER2 and CRY1 and plays a critical role in maintaining a controlled rhythmicity in histone acetylation, thereby contributing to circadian chromatin remodeling (PubMed:18662546, PubMed:18662547, PubMed:19299583). Deacetylates BMAL1 and histones at the circadian gene promoters in order to facilitate repression by inhibitory components of the circadian oscillator (PubMed:18662546, PubMed:18662547, PubMed:19299583). Deacetylates PER2, facilitating its ubiquitination and degradation by the proteasome (PubMed:18662546). Protects cardiomyocytes against palmitate-induced apoptosis (PubMed:21622680). Deacetylates XBP1 isoform 2; deacetylation decreases protein stability of XBP1 isoform 2 and inhibits its transcriptional activity (By similarity). Deacetylates PCK1 and directs its activity toward phosphoenolpyruvate production promoting gluconeogenesis (PubMed:30193097). Involved in the CCAR2-mediated regulation of PCK1 and NR1D1 (By similarity). Deacetylates CTNB1 at 'Lys-49' (By similarity). In POMC (pro-opiomelanocortin) neurons, required for leptin-induced activation of PI3K signaling (PubMed:20620997). Deacetylates SOX9; promoting SOX9 nuclear localization and transactivation activity (PubMed:26910618). Involved in the regulation of centrosome duplication: Deacetylates CENATAC in G1 phase, allowing for SASS6 accumulation on the centrosome and subsequent procentriole assembly (By similarity). Deacetylates NDC80/HEC1 (By similarity). In addition to protein deacetylase activity, also acts as a protein-lysine deacylase by mediating protein delactylation, depropionylation and decrotonylation (PubMed:30026585). Mediates depropionylation of Osterix (SP7) (PubMed:30026585). Catalyzes decrotonylation of histones; it however does not represent a major histone decrotonylase (By similarity). Mediates protein delactylation of TEAD1 and YAP1 (By similarity).</text>
</comment>
<comment type="function">
    <molecule>Isoform 2</molecule>
    <text evidence="3">Deacetylates 'Lys-382' of p53/TP53, however with lower activity than isoform 1. In combination, the two isoforms exert an additive effect. Isoform 2 regulates p53/TP53 expression and cellular stress response and is in turn repressed by p53/TP53 presenting a SIRT1 isoform-dependent auto-regulatory loop.</text>
</comment>
<comment type="function">
    <molecule>SirtT1 75 kDa fragment</molecule>
    <text evidence="3">Catalytically inactive 75SirT1 may be involved in regulation of apoptosis. May be involved in protecting chondrocytes from apoptotic death by associating with cytochrome C and interfering with apoptosome assembly.</text>
</comment>
<comment type="catalytic activity">
    <reaction evidence="4 43 58 59">
        <text>N(6)-acetyl-L-lysyl-[protein] + NAD(+) + H2O = 2''-O-acetyl-ADP-D-ribose + nicotinamide + L-lysyl-[protein]</text>
        <dbReference type="Rhea" id="RHEA:43636"/>
        <dbReference type="Rhea" id="RHEA-COMP:9752"/>
        <dbReference type="Rhea" id="RHEA-COMP:10731"/>
        <dbReference type="ChEBI" id="CHEBI:15377"/>
        <dbReference type="ChEBI" id="CHEBI:17154"/>
        <dbReference type="ChEBI" id="CHEBI:29969"/>
        <dbReference type="ChEBI" id="CHEBI:57540"/>
        <dbReference type="ChEBI" id="CHEBI:61930"/>
        <dbReference type="ChEBI" id="CHEBI:83767"/>
        <dbReference type="EC" id="2.3.1.286"/>
    </reaction>
</comment>
<comment type="catalytic activity">
    <reaction evidence="64">
        <text>N(6)-propanoyl-L-lysyl-[protein] + NAD(+) + H2O = 3''-O-propanoyl-ADP-D-ribose + nicotinamide + L-lysyl-[protein]</text>
        <dbReference type="Rhea" id="RHEA:23500"/>
        <dbReference type="Rhea" id="RHEA-COMP:9752"/>
        <dbReference type="Rhea" id="RHEA-COMP:13758"/>
        <dbReference type="ChEBI" id="CHEBI:15377"/>
        <dbReference type="ChEBI" id="CHEBI:17154"/>
        <dbReference type="ChEBI" id="CHEBI:29969"/>
        <dbReference type="ChEBI" id="CHEBI:57540"/>
        <dbReference type="ChEBI" id="CHEBI:138019"/>
        <dbReference type="ChEBI" id="CHEBI:145015"/>
    </reaction>
    <physiologicalReaction direction="left-to-right" evidence="64">
        <dbReference type="Rhea" id="RHEA:23501"/>
    </physiologicalReaction>
</comment>
<comment type="catalytic activity">
    <reaction evidence="3">
        <text>N(6)-(2E)-butenoyl-L-lysyl-[protein] + NAD(+) + H2O = 2''-O-(2E)-but-2-enoyl-ADP-D-ribose + nicotinamide + L-lysyl-[protein]</text>
        <dbReference type="Rhea" id="RHEA:69332"/>
        <dbReference type="Rhea" id="RHEA-COMP:9752"/>
        <dbReference type="Rhea" id="RHEA-COMP:13707"/>
        <dbReference type="ChEBI" id="CHEBI:15377"/>
        <dbReference type="ChEBI" id="CHEBI:17154"/>
        <dbReference type="ChEBI" id="CHEBI:29969"/>
        <dbReference type="ChEBI" id="CHEBI:57540"/>
        <dbReference type="ChEBI" id="CHEBI:137954"/>
        <dbReference type="ChEBI" id="CHEBI:183235"/>
    </reaction>
    <physiologicalReaction direction="left-to-right" evidence="3">
        <dbReference type="Rhea" id="RHEA:69333"/>
    </physiologicalReaction>
</comment>
<comment type="catalytic activity">
    <reaction evidence="3">
        <text>N(6)-[(S)-lactoyl]-L-lysyl-[protein] + NAD(+) + H2O = 2''-O-(S)-lactoyl-ADP-D-ribose + nicotinamide + L-lysyl-[protein]</text>
        <dbReference type="Rhea" id="RHEA:80287"/>
        <dbReference type="Rhea" id="RHEA-COMP:9752"/>
        <dbReference type="Rhea" id="RHEA-COMP:19466"/>
        <dbReference type="ChEBI" id="CHEBI:15377"/>
        <dbReference type="ChEBI" id="CHEBI:17154"/>
        <dbReference type="ChEBI" id="CHEBI:29969"/>
        <dbReference type="ChEBI" id="CHEBI:57540"/>
        <dbReference type="ChEBI" id="CHEBI:231484"/>
        <dbReference type="ChEBI" id="CHEBI:231527"/>
    </reaction>
    <physiologicalReaction direction="left-to-right" evidence="3">
        <dbReference type="Rhea" id="RHEA:80288"/>
    </physiologicalReaction>
</comment>
<comment type="cofactor">
    <cofactor evidence="2">
        <name>Zn(2+)</name>
        <dbReference type="ChEBI" id="CHEBI:29105"/>
    </cofactor>
    <text evidence="2">Binds 1 zinc ion per subunit.</text>
</comment>
<comment type="activity regulation">
    <text evidence="3">Activated by resveratrol (3,5,4'-trihydroxy-trans-stilbene), butein (3,4,2',4'-tetrahydroxychalcone), piceatannol (3,5,3',4'-tetrahydroxy-trans-stilbene), Isoliquiritigenin (4,2',4'-trihydroxychalcone), fisetin (3,7,3',4'-tetrahydroxyflavone) and quercetin (3,5,7,3',4'-pentahydroxyflavone). MAPK8/JNK1 and RPS19BP1/AROS act as positive regulators of deacetylation activity (By similarity). Inhibited by nicotinamide. Negatively regulated by CCAR2 (By similarity).</text>
</comment>
<comment type="subunit">
    <text evidence="3 7 10 12 13 20 23 28 35 36 39 40 41 45 49 53 55 57 59">Interacts with XBP1 isoform 2 (By similarity). Found in a complex with PCAF and MYOD1 Component of the eNoSC complex, composed of SIRT1, SUV39H1 and RRP8. Interacts with HES1, HEY2 and PML. Interacts with RPS19BP1/AROS. Interacts with CCAR2 (via N-terminus); the interaction disrupts the interaction between SIRT1 and p53/TP53. Interacts with SETD7; the interaction induces the dissociation of SIRT1 from p53/TP53 and increases p53/TP53 activity. Interacts with MYCN, NR1I2, CREBZF, TSC2, TLE1, FOS, JUN, NR0B2, PPARG, NCOR, IRS1, IRS2 and NMNAT1. Interacts with HNF1A; the interaction occurs under nutrient restriction. Interacts with SUZ12; the interaction mediates the association with the PRC4 histone methylation complex which is specific as an association with PCR2 and PCR3 complex variants is not found. Interacts with FOXO1; the interaction deacetylates FOXO1, enhances its DNA-binding ability and increases its transcriptional activity. Interacts with BCL6; leads to a epigenetic repression of specific target genes. Interacts with CLOCK, BMAL1 and PER2. Interacts with PPARA; the interaction seems to be modulated by NAD(+) levels. Interacts with NR1H3 and this interaction is inhibited in the presence of CCAR2. Interacts with CHEK2 and p53/TP53. Exhibits a preferential interaction with sumoylated CCAR2 over its unmodified form (By similarity). Interacts with PACS2 (By similarity). Interacts with SIRT7 (PubMed:28842251, PubMed:28923965). Interacts with PUS7 (By similarity). Interacts with TULP3 (By similarity). Interacts with MORN3; the interaction enhances the ubiquitination of p53/TP53 (By similarity).</text>
</comment>
<comment type="interaction">
    <interactant intactId="EBI-1802585">
        <id>Q923E4</id>
    </interactant>
    <interactant intactId="EBI-79859">
        <id>O08785</id>
        <label>Clock</label>
    </interactant>
    <organismsDiffer>false</organismsDiffer>
    <experiments>11</experiments>
</comment>
<comment type="interaction">
    <interactant intactId="EBI-1802585">
        <id>Q923E4</id>
    </interactant>
    <interactant intactId="EBI-80344">
        <id>Q61214</id>
        <label>Dyrk1a</label>
    </interactant>
    <organismsDiffer>false</organismsDiffer>
    <experiments>4</experiments>
</comment>
<comment type="interaction">
    <interactant intactId="EBI-1802585">
        <id>Q923E4</id>
    </interactant>
    <interactant intactId="EBI-5242007">
        <id>Q922Y0</id>
        <label>Dyrk3</label>
    </interactant>
    <organismsDiffer>false</organismsDiffer>
    <experiments>7</experiments>
</comment>
<comment type="interaction">
    <interactant intactId="EBI-1802585">
        <id>Q923E4</id>
    </interactant>
    <interactant intactId="EBI-5236187">
        <id>Q9R1Y5</id>
        <label>Hic1</label>
    </interactant>
    <organismsDiffer>false</organismsDiffer>
    <experiments>2</experiments>
</comment>
<comment type="interaction">
    <interactant intactId="EBI-1802585">
        <id>Q923E4</id>
    </interactant>
    <interactant intactId="EBI-5272860">
        <id>P22361</id>
        <label>Hnf1a</label>
    </interactant>
    <organismsDiffer>false</organismsDiffer>
    <experiments>5</experiments>
</comment>
<comment type="interaction">
    <interactant intactId="EBI-1802585">
        <id>Q923E4</id>
    </interactant>
    <interactant intactId="EBI-1369862">
        <id>P81122</id>
        <label>Irs2</label>
    </interactant>
    <organismsDiffer>false</organismsDiffer>
    <experiments>2</experiments>
</comment>
<comment type="interaction">
    <interactant intactId="EBI-1802585">
        <id>Q923E4</id>
    </interactant>
    <interactant intactId="EBI-349004">
        <id>Q60974</id>
        <label>Ncor1</label>
    </interactant>
    <organismsDiffer>false</organismsDiffer>
    <experiments>3</experiments>
</comment>
<comment type="interaction">
    <interactant intactId="EBI-1802585">
        <id>Q923E4</id>
    </interactant>
    <interactant intactId="EBI-5378529">
        <id>Q64221</id>
        <label>Nhlh2</label>
    </interactant>
    <organismsDiffer>false</organismsDiffer>
    <experiments>2</experiments>
</comment>
<comment type="interaction">
    <interactant intactId="EBI-1802585">
        <id>Q923E4</id>
    </interactant>
    <interactant intactId="EBI-4310440">
        <id>Q62227</id>
        <label>Nr0b2</label>
    </interactant>
    <organismsDiffer>false</organismsDiffer>
    <experiments>2</experiments>
</comment>
<comment type="interaction">
    <interactant intactId="EBI-1802585">
        <id>Q923E4</id>
    </interactant>
    <interactant intactId="EBI-5260705">
        <id>P37238</id>
        <label>Pparg</label>
    </interactant>
    <organismsDiffer>false</organismsDiffer>
    <experiments>2</experiments>
</comment>
<comment type="interaction">
    <interactant intactId="EBI-1802585">
        <id>Q923E4</id>
    </interactant>
    <interactant intactId="EBI-1371053">
        <id>O70343</id>
        <label>Ppargc1a</label>
    </interactant>
    <organismsDiffer>false</organismsDiffer>
    <experiments>6</experiments>
</comment>
<comment type="interaction">
    <interactant intactId="EBI-1802585">
        <id>Q923E4</id>
    </interactant>
    <interactant intactId="EBI-644400">
        <id>Q04207</id>
        <label>Rela</label>
    </interactant>
    <organismsDiffer>false</organismsDiffer>
    <experiments>2</experiments>
</comment>
<comment type="interaction">
    <interactant intactId="EBI-1802585">
        <id>Q923E4</id>
    </interactant>
    <interactant intactId="EBI-5274835">
        <id>O35253</id>
        <label>Smad7</label>
    </interactant>
    <organismsDiffer>false</organismsDiffer>
    <experiments>6</experiments>
</comment>
<comment type="interaction">
    <interactant intactId="EBI-1802585">
        <id>Q923E4</id>
    </interactant>
    <interactant intactId="EBI-5273743">
        <id>Q9WTN3</id>
        <label>Srebf1</label>
    </interactant>
    <organismsDiffer>false</organismsDiffer>
    <experiments>2</experiments>
</comment>
<comment type="interaction">
    <interactant intactId="EBI-1802585">
        <id>Q923E4</id>
    </interactant>
    <interactant intactId="EBI-448924">
        <id>Q01094</id>
        <label>E2F1</label>
    </interactant>
    <organismsDiffer>true</organismsDiffer>
    <experiments>3</experiments>
</comment>
<comment type="interaction">
    <interactant intactId="EBI-1802585">
        <id>Q923E4</id>
    </interactant>
    <interactant intactId="EBI-1108782">
        <id>Q12778</id>
        <label>FOXO1</label>
    </interactant>
    <organismsDiffer>true</organismsDiffer>
    <experiments>2</experiments>
</comment>
<comment type="interaction">
    <interactant intactId="EBI-1802585">
        <id>Q923E4</id>
    </interactant>
    <interactant intactId="EBI-491274">
        <id>P06400</id>
        <label>RB1</label>
    </interactant>
    <organismsDiffer>true</organismsDiffer>
    <experiments>4</experiments>
</comment>
<comment type="interaction">
    <interactant intactId="EBI-1802585">
        <id>Q923E4</id>
    </interactant>
    <interactant intactId="EBI-971402">
        <id>P28749</id>
        <label>RBL1</label>
    </interactant>
    <organismsDiffer>true</organismsDiffer>
    <experiments>2</experiments>
</comment>
<comment type="interaction">
    <interactant intactId="EBI-1802585">
        <id>Q923E4</id>
    </interactant>
    <interactant intactId="EBI-971439">
        <id>Q08999</id>
        <label>RBL2</label>
    </interactant>
    <organismsDiffer>true</organismsDiffer>
    <experiments>2</experiments>
</comment>
<comment type="interaction">
    <interactant intactId="EBI-1802585">
        <id>Q923E4</id>
    </interactant>
    <interactant intactId="EBI-366083">
        <id>P04637</id>
        <label>TP53</label>
    </interactant>
    <organismsDiffer>true</organismsDiffer>
    <experiments>4</experiments>
</comment>
<comment type="subcellular location">
    <subcellularLocation>
        <location evidence="3">Nucleus</location>
        <location evidence="3">PML body</location>
    </subcellularLocation>
    <subcellularLocation>
        <location evidence="25 28">Cytoplasm</location>
    </subcellularLocation>
    <subcellularLocation>
        <location evidence="25 28 30 35 47">Nucleus</location>
    </subcellularLocation>
    <text evidence="3 25">Colocalizes in the nucleus with XBP1 isoform 2. Recruited to the nuclear bodies via its interaction with PML. Colocalized with APEX1 in the nucleus. May be found in nucleolus, nuclear euchromatin, heterochromatin and inner membrane (By similarity). Shuttles between nucleus and cytoplasm (PubMed:17197703).</text>
</comment>
<comment type="subcellular location">
    <molecule>SirtT1 75 kDa fragment</molecule>
    <subcellularLocation>
        <location evidence="3">Cytoplasm</location>
    </subcellularLocation>
    <subcellularLocation>
        <location evidence="3">Mitochondrion</location>
    </subcellularLocation>
</comment>
<comment type="alternative products">
    <event type="alternative splicing"/>
    <isoform>
        <id>Q923E4-1</id>
        <name>1</name>
        <sequence type="displayed"/>
    </isoform>
    <isoform>
        <id>Q923E4-2</id>
        <name>2</name>
        <name>delta-exon8</name>
        <sequence type="described" ref="VSP_042190"/>
    </isoform>
</comment>
<comment type="tissue specificity">
    <text evidence="8">Widely expressed. Weakly expressed in liver and skeletal muscle.</text>
</comment>
<comment type="induction">
    <text evidence="16 19 35 36 52">By calorie restriction which induces endothelial nitric oxide synthase (eNOS) expression. Induced in liver by pyruvate during fasting. Expressed in a circadian manner in the liver with maximal and minimal levels reached at around Zeitgeber time (ZT) 16 and ZT4, respectively. Its deacetylase activity in the liver is also regulated in a circadian manner, with a peak at ZT15. Down-regulated by palmitate; palmitate down-regulation is mediated by the induction of miR-195 that directly targets SIRT1.</text>
</comment>
<comment type="PTM">
    <text evidence="3">Methylated on multiple lysine residues; methylation is enhanced after DNA damage and is dispensable for deacetylase activity toward p53/TP53.</text>
</comment>
<comment type="PTM">
    <text evidence="3 43">Phosphorylated. Phosphorylated by STK4/MST1, resulting in inhibition of SIRT1-mediated p53/TP53 deacetylation. Phosphorylation by MAPK8/JNK1 at Ser-46 and Thr-522 leads to increased nuclear localization and enzymatic activity. Phosphorylation at Thr-522 by DYRK1A and DYRK3 activates deacetylase activity and promotes cell survival (PubMed:20167603). Phosphorylation by mammalian target of rapamycin complex 1 (mTORC1) at Ser-46 inhibits deacetylation activity. Phosphorylated by CaMK2, leading to increased p53/TP53 and NF-kappa-B p65/RELA deacetylation activity (By similarity).</text>
</comment>
<comment type="PTM">
    <text evidence="3">Proteolytically cleaved by cathepsin B upon TNF-alpha treatment to yield catalytic inactive but stable SirtT1 75 kDa fragment (75SirT1).</text>
</comment>
<comment type="PTM">
    <text evidence="48">S-nitrosylated by GAPDH, leading to inhibit the NAD-dependent protein deacetylase activity.</text>
</comment>
<comment type="PTM">
    <text evidence="59">Acetylated at various Lys residues (PubMed:28923965). Deacetylated via an autocatalytic mechanism (PubMed:28923965). Autodeacetylation at Lys-230 promotes its protein deacetylase activity (PubMed:28923965).</text>
</comment>
<comment type="PTM">
    <text evidence="3">Ubiquitinated; leading to degradation. Deubiquitinated by USP22; leading to stabilization.</text>
</comment>
<comment type="disruption phenotype">
    <text evidence="8 30 31 37 44 51">High degree of embryonic and postnatal lethality. Decreased levels of histone H3 containing a trimethyl group at its lysine 9 position (H3K9me3) in regions of heterochromatin. Attenuates spermatogenesis but not oogenesis with reduced numbers of mature sperm and spermatogenic precursors. Mice develop an autoimmune-like condition with late onset diabetes insipidus. Prostatic intraepithelial neoplasia associated with reduced autophagy. Conditional knockout in POMC neurons leads to an increase of body weight compare to controls when animals are challenged with high-fat diet (PubMed:20620997).</text>
</comment>
<comment type="similarity">
    <text evidence="62">Belongs to the sirtuin family. Class I subfamily.</text>
</comment>
<dbReference type="EC" id="2.3.1.286" evidence="4 43 58"/>
<dbReference type="EC" id="2.3.1.-" evidence="64"/>
<dbReference type="EMBL" id="AF214646">
    <property type="protein sequence ID" value="AAF24983.1"/>
    <property type="molecule type" value="mRNA"/>
</dbReference>
<dbReference type="EMBL" id="BC006584">
    <property type="protein sequence ID" value="AAH06584.1"/>
    <property type="molecule type" value="mRNA"/>
</dbReference>
<dbReference type="CCDS" id="CCDS23898.1">
    <molecule id="Q923E4-1"/>
</dbReference>
<dbReference type="RefSeq" id="NP_062786.1">
    <molecule id="Q923E4-1"/>
    <property type="nucleotide sequence ID" value="NM_019812.3"/>
</dbReference>
<dbReference type="SMR" id="Q923E4"/>
<dbReference type="BioGRID" id="220297">
    <property type="interactions" value="53"/>
</dbReference>
<dbReference type="ComplexPortal" id="CPX-468">
    <property type="entry name" value="eNoSc complex"/>
</dbReference>
<dbReference type="CORUM" id="Q923E4"/>
<dbReference type="DIP" id="DIP-47052N"/>
<dbReference type="FunCoup" id="Q923E4">
    <property type="interactions" value="4573"/>
</dbReference>
<dbReference type="IntAct" id="Q923E4">
    <property type="interactions" value="56"/>
</dbReference>
<dbReference type="MINT" id="Q923E4"/>
<dbReference type="STRING" id="10090.ENSMUSP00000112595"/>
<dbReference type="GlyGen" id="Q923E4">
    <property type="glycosylation" value="1 site, 1 O-linked glycan (1 site)"/>
</dbReference>
<dbReference type="iPTMnet" id="Q923E4"/>
<dbReference type="PhosphoSitePlus" id="Q923E4"/>
<dbReference type="jPOST" id="Q923E4"/>
<dbReference type="PaxDb" id="10090-ENSMUSP00000101082"/>
<dbReference type="PeptideAtlas" id="Q923E4"/>
<dbReference type="ProteomicsDB" id="257181">
    <molecule id="Q923E4-1"/>
</dbReference>
<dbReference type="ProteomicsDB" id="257182">
    <molecule id="Q923E4-2"/>
</dbReference>
<dbReference type="Pumba" id="Q923E4"/>
<dbReference type="Antibodypedia" id="1637">
    <property type="antibodies" value="1151 antibodies from 51 providers"/>
</dbReference>
<dbReference type="DNASU" id="93759"/>
<dbReference type="Ensembl" id="ENSMUST00000020257.13">
    <molecule id="Q923E4-1"/>
    <property type="protein sequence ID" value="ENSMUSP00000020257.7"/>
    <property type="gene ID" value="ENSMUSG00000020063.17"/>
</dbReference>
<dbReference type="Ensembl" id="ENSMUST00000120239.8">
    <molecule id="Q923E4-1"/>
    <property type="protein sequence ID" value="ENSMUSP00000112595.2"/>
    <property type="gene ID" value="ENSMUSG00000020063.17"/>
</dbReference>
<dbReference type="Ensembl" id="ENSMUST00000177694.8">
    <molecule id="Q923E4-2"/>
    <property type="protein sequence ID" value="ENSMUSP00000137565.2"/>
    <property type="gene ID" value="ENSMUSG00000020063.17"/>
</dbReference>
<dbReference type="GeneID" id="93759"/>
<dbReference type="KEGG" id="mmu:93759"/>
<dbReference type="UCSC" id="uc007fke.2">
    <molecule id="Q923E4-1"/>
    <property type="organism name" value="mouse"/>
</dbReference>
<dbReference type="AGR" id="MGI:2135607"/>
<dbReference type="CTD" id="23411"/>
<dbReference type="MGI" id="MGI:2135607">
    <property type="gene designation" value="Sirt1"/>
</dbReference>
<dbReference type="VEuPathDB" id="HostDB:ENSMUSG00000020063"/>
<dbReference type="eggNOG" id="KOG2684">
    <property type="taxonomic scope" value="Eukaryota"/>
</dbReference>
<dbReference type="GeneTree" id="ENSGT00940000159406"/>
<dbReference type="HOGENOM" id="CLU_016587_0_0_1"/>
<dbReference type="InParanoid" id="Q923E4"/>
<dbReference type="OMA" id="RYWMSRV"/>
<dbReference type="OrthoDB" id="424302at2759"/>
<dbReference type="PhylomeDB" id="Q923E4"/>
<dbReference type="BRENDA" id="2.3.1.286">
    <property type="organism ID" value="3474"/>
</dbReference>
<dbReference type="Reactome" id="R-MMU-3371453">
    <property type="pathway name" value="Regulation of HSF1-mediated heat shock response"/>
</dbReference>
<dbReference type="Reactome" id="R-MMU-9617629">
    <property type="pathway name" value="Regulation of FOXO transcriptional activity by acetylation"/>
</dbReference>
<dbReference type="Reactome" id="R-MMU-9856649">
    <property type="pathway name" value="Transcriptional and post-translational regulation of MITF-M expression and activity"/>
</dbReference>
<dbReference type="BioGRID-ORCS" id="93759">
    <property type="hits" value="2 hits in 118 CRISPR screens"/>
</dbReference>
<dbReference type="ChiTaRS" id="Sirt1">
    <property type="organism name" value="mouse"/>
</dbReference>
<dbReference type="PRO" id="PR:Q923E4"/>
<dbReference type="Proteomes" id="UP000000589">
    <property type="component" value="Chromosome 10"/>
</dbReference>
<dbReference type="RNAct" id="Q923E4">
    <property type="molecule type" value="protein"/>
</dbReference>
<dbReference type="Bgee" id="ENSMUSG00000020063">
    <property type="expression patterns" value="Expressed in cleaving embryo and 259 other cell types or tissues"/>
</dbReference>
<dbReference type="ExpressionAtlas" id="Q923E4">
    <property type="expression patterns" value="baseline and differential"/>
</dbReference>
<dbReference type="GO" id="GO:0000785">
    <property type="term" value="C:chromatin"/>
    <property type="evidence" value="ECO:0000314"/>
    <property type="project" value="UniProtKB"/>
</dbReference>
<dbReference type="GO" id="GO:0005737">
    <property type="term" value="C:cytoplasm"/>
    <property type="evidence" value="ECO:0000314"/>
    <property type="project" value="UniProtKB"/>
</dbReference>
<dbReference type="GO" id="GO:0005829">
    <property type="term" value="C:cytosol"/>
    <property type="evidence" value="ECO:0007669"/>
    <property type="project" value="Ensembl"/>
</dbReference>
<dbReference type="GO" id="GO:0061773">
    <property type="term" value="C:eNoSc complex"/>
    <property type="evidence" value="ECO:0000266"/>
    <property type="project" value="ComplexPortal"/>
</dbReference>
<dbReference type="GO" id="GO:0035098">
    <property type="term" value="C:ESC/E(Z) complex"/>
    <property type="evidence" value="ECO:0007669"/>
    <property type="project" value="Ensembl"/>
</dbReference>
<dbReference type="GO" id="GO:0000791">
    <property type="term" value="C:euchromatin"/>
    <property type="evidence" value="ECO:0000250"/>
    <property type="project" value="UniProtKB"/>
</dbReference>
<dbReference type="GO" id="GO:0001650">
    <property type="term" value="C:fibrillar center"/>
    <property type="evidence" value="ECO:0007669"/>
    <property type="project" value="Ensembl"/>
</dbReference>
<dbReference type="GO" id="GO:0000792">
    <property type="term" value="C:heterochromatin"/>
    <property type="evidence" value="ECO:0000314"/>
    <property type="project" value="UniProtKB"/>
</dbReference>
<dbReference type="GO" id="GO:0005739">
    <property type="term" value="C:mitochondrion"/>
    <property type="evidence" value="ECO:0000314"/>
    <property type="project" value="MGI"/>
</dbReference>
<dbReference type="GO" id="GO:0005637">
    <property type="term" value="C:nuclear inner membrane"/>
    <property type="evidence" value="ECO:0000250"/>
    <property type="project" value="UniProtKB"/>
</dbReference>
<dbReference type="GO" id="GO:0005730">
    <property type="term" value="C:nucleolus"/>
    <property type="evidence" value="ECO:0000266"/>
    <property type="project" value="ComplexPortal"/>
</dbReference>
<dbReference type="GO" id="GO:0005654">
    <property type="term" value="C:nucleoplasm"/>
    <property type="evidence" value="ECO:0000250"/>
    <property type="project" value="UniProtKB"/>
</dbReference>
<dbReference type="GO" id="GO:0005634">
    <property type="term" value="C:nucleus"/>
    <property type="evidence" value="ECO:0000314"/>
    <property type="project" value="UniProtKB"/>
</dbReference>
<dbReference type="GO" id="GO:0016605">
    <property type="term" value="C:PML body"/>
    <property type="evidence" value="ECO:0007669"/>
    <property type="project" value="UniProtKB-SubCell"/>
</dbReference>
<dbReference type="GO" id="GO:0032991">
    <property type="term" value="C:protein-containing complex"/>
    <property type="evidence" value="ECO:0000314"/>
    <property type="project" value="MGI"/>
</dbReference>
<dbReference type="GO" id="GO:0033553">
    <property type="term" value="C:rDNA heterochromatin"/>
    <property type="evidence" value="ECO:0007669"/>
    <property type="project" value="Ensembl"/>
</dbReference>
<dbReference type="GO" id="GO:0043425">
    <property type="term" value="F:bHLH transcription factor binding"/>
    <property type="evidence" value="ECO:0000250"/>
    <property type="project" value="UniProtKB"/>
</dbReference>
<dbReference type="GO" id="GO:0019213">
    <property type="term" value="F:deacetylase activity"/>
    <property type="evidence" value="ECO:0000314"/>
    <property type="project" value="BHF-UCL"/>
</dbReference>
<dbReference type="GO" id="GO:0008047">
    <property type="term" value="F:enzyme activator activity"/>
    <property type="evidence" value="ECO:0007669"/>
    <property type="project" value="Ensembl"/>
</dbReference>
<dbReference type="GO" id="GO:0019899">
    <property type="term" value="F:enzyme binding"/>
    <property type="evidence" value="ECO:0000353"/>
    <property type="project" value="UniProtKB"/>
</dbReference>
<dbReference type="GO" id="GO:0004857">
    <property type="term" value="F:enzyme inhibitor activity"/>
    <property type="evidence" value="ECO:0000314"/>
    <property type="project" value="BHF-UCL"/>
</dbReference>
<dbReference type="GO" id="GO:0042393">
    <property type="term" value="F:histone binding"/>
    <property type="evidence" value="ECO:0007669"/>
    <property type="project" value="Ensembl"/>
</dbReference>
<dbReference type="GO" id="GO:0017136">
    <property type="term" value="F:histone deacetylase activity, NAD-dependent"/>
    <property type="evidence" value="ECO:0000314"/>
    <property type="project" value="MGI"/>
</dbReference>
<dbReference type="GO" id="GO:0032041">
    <property type="term" value="F:histone H3K14 deacetylase activity, NAD-dependent"/>
    <property type="evidence" value="ECO:0007669"/>
    <property type="project" value="Ensembl"/>
</dbReference>
<dbReference type="GO" id="GO:0046969">
    <property type="term" value="F:histone H3K9 deacetylase activity, NAD-dependent"/>
    <property type="evidence" value="ECO:0000314"/>
    <property type="project" value="UniProtKB"/>
</dbReference>
<dbReference type="GO" id="GO:0140937">
    <property type="term" value="F:histone H4K12 deacetylase activity, hydrolytic mechanism"/>
    <property type="evidence" value="ECO:0007669"/>
    <property type="project" value="Ensembl"/>
</dbReference>
<dbReference type="GO" id="GO:0046970">
    <property type="term" value="F:histone H4K16 deacetylase activity, NAD-dependent"/>
    <property type="evidence" value="ECO:0007669"/>
    <property type="project" value="Ensembl"/>
</dbReference>
<dbReference type="GO" id="GO:0043398">
    <property type="term" value="F:HLH domain binding"/>
    <property type="evidence" value="ECO:0007669"/>
    <property type="project" value="Ensembl"/>
</dbReference>
<dbReference type="GO" id="GO:0042802">
    <property type="term" value="F:identical protein binding"/>
    <property type="evidence" value="ECO:0007669"/>
    <property type="project" value="Ensembl"/>
</dbReference>
<dbReference type="GO" id="GO:1990254">
    <property type="term" value="F:keratin filament binding"/>
    <property type="evidence" value="ECO:0007669"/>
    <property type="project" value="Ensembl"/>
</dbReference>
<dbReference type="GO" id="GO:0046872">
    <property type="term" value="F:metal ion binding"/>
    <property type="evidence" value="ECO:0007669"/>
    <property type="project" value="UniProtKB-KW"/>
</dbReference>
<dbReference type="GO" id="GO:0051019">
    <property type="term" value="F:mitogen-activated protein kinase binding"/>
    <property type="evidence" value="ECO:0007669"/>
    <property type="project" value="Ensembl"/>
</dbReference>
<dbReference type="GO" id="GO:0070403">
    <property type="term" value="F:NAD+ binding"/>
    <property type="evidence" value="ECO:0007669"/>
    <property type="project" value="InterPro"/>
</dbReference>
<dbReference type="GO" id="GO:0160012">
    <property type="term" value="F:NAD-dependent histone decrotonylase activity"/>
    <property type="evidence" value="ECO:0000250"/>
    <property type="project" value="UniProtKB"/>
</dbReference>
<dbReference type="GO" id="GO:0034979">
    <property type="term" value="F:NAD-dependent protein lysine deacetylase activity"/>
    <property type="evidence" value="ECO:0000314"/>
    <property type="project" value="UniProtKB"/>
</dbReference>
<dbReference type="GO" id="GO:0141208">
    <property type="term" value="F:NAD-dependent protein lysine delactylase activity"/>
    <property type="evidence" value="ECO:0000250"/>
    <property type="project" value="UniProtKB"/>
</dbReference>
<dbReference type="GO" id="GO:0106231">
    <property type="term" value="F:NAD-dependent protein-lysine depropionylase activity"/>
    <property type="evidence" value="ECO:0000315"/>
    <property type="project" value="UniProtKB"/>
</dbReference>
<dbReference type="GO" id="GO:0016922">
    <property type="term" value="F:nuclear receptor binding"/>
    <property type="evidence" value="ECO:0007669"/>
    <property type="project" value="Ensembl"/>
</dbReference>
<dbReference type="GO" id="GO:0002039">
    <property type="term" value="F:p53 binding"/>
    <property type="evidence" value="ECO:0000353"/>
    <property type="project" value="BHF-UCL"/>
</dbReference>
<dbReference type="GO" id="GO:1990841">
    <property type="term" value="F:promoter-specific chromatin binding"/>
    <property type="evidence" value="ECO:0000314"/>
    <property type="project" value="MGI"/>
</dbReference>
<dbReference type="GO" id="GO:0019904">
    <property type="term" value="F:protein domain specific binding"/>
    <property type="evidence" value="ECO:0000353"/>
    <property type="project" value="BHF-UCL"/>
</dbReference>
<dbReference type="GO" id="GO:0033558">
    <property type="term" value="F:protein lysine deacetylase activity"/>
    <property type="evidence" value="ECO:0000314"/>
    <property type="project" value="UniProtKB"/>
</dbReference>
<dbReference type="GO" id="GO:0000978">
    <property type="term" value="F:RNA polymerase II cis-regulatory region sequence-specific DNA binding"/>
    <property type="evidence" value="ECO:0000314"/>
    <property type="project" value="UniProtKB"/>
</dbReference>
<dbReference type="GO" id="GO:0003713">
    <property type="term" value="F:transcription coactivator activity"/>
    <property type="evidence" value="ECO:0000314"/>
    <property type="project" value="BHF-UCL"/>
</dbReference>
<dbReference type="GO" id="GO:0003714">
    <property type="term" value="F:transcription corepressor activity"/>
    <property type="evidence" value="ECO:0000315"/>
    <property type="project" value="BHF-UCL"/>
</dbReference>
<dbReference type="GO" id="GO:0140416">
    <property type="term" value="F:transcription regulator inhibitor activity"/>
    <property type="evidence" value="ECO:0000250"/>
    <property type="project" value="BHF-UCL"/>
</dbReference>
<dbReference type="GO" id="GO:0001525">
    <property type="term" value="P:angiogenesis"/>
    <property type="evidence" value="ECO:0000315"/>
    <property type="project" value="UniProtKB"/>
</dbReference>
<dbReference type="GO" id="GO:0042595">
    <property type="term" value="P:behavioral response to starvation"/>
    <property type="evidence" value="ECO:0000315"/>
    <property type="project" value="MGI"/>
</dbReference>
<dbReference type="GO" id="GO:0042149">
    <property type="term" value="P:cellular response to glucose starvation"/>
    <property type="evidence" value="ECO:0000266"/>
    <property type="project" value="ComplexPortal"/>
</dbReference>
<dbReference type="GO" id="GO:0070301">
    <property type="term" value="P:cellular response to hydrogen peroxide"/>
    <property type="evidence" value="ECO:0007669"/>
    <property type="project" value="Ensembl"/>
</dbReference>
<dbReference type="GO" id="GO:0071456">
    <property type="term" value="P:cellular response to hypoxia"/>
    <property type="evidence" value="ECO:0000250"/>
    <property type="project" value="UniProtKB"/>
</dbReference>
<dbReference type="GO" id="GO:0071479">
    <property type="term" value="P:cellular response to ionizing radiation"/>
    <property type="evidence" value="ECO:0000315"/>
    <property type="project" value="UniProtKB"/>
</dbReference>
<dbReference type="GO" id="GO:1990830">
    <property type="term" value="P:cellular response to leukemia inhibitory factor"/>
    <property type="evidence" value="ECO:0000270"/>
    <property type="project" value="MGI"/>
</dbReference>
<dbReference type="GO" id="GO:0009267">
    <property type="term" value="P:cellular response to starvation"/>
    <property type="evidence" value="ECO:0000315"/>
    <property type="project" value="BHF-UCL"/>
</dbReference>
<dbReference type="GO" id="GO:0071356">
    <property type="term" value="P:cellular response to tumor necrosis factor"/>
    <property type="evidence" value="ECO:0000250"/>
    <property type="project" value="UniProtKB"/>
</dbReference>
<dbReference type="GO" id="GO:0042632">
    <property type="term" value="P:cholesterol homeostasis"/>
    <property type="evidence" value="ECO:0000315"/>
    <property type="project" value="UniProtKB"/>
</dbReference>
<dbReference type="GO" id="GO:0032922">
    <property type="term" value="P:circadian regulation of gene expression"/>
    <property type="evidence" value="ECO:0000315"/>
    <property type="project" value="UniProtKB"/>
</dbReference>
<dbReference type="GO" id="GO:0007623">
    <property type="term" value="P:circadian rhythm"/>
    <property type="evidence" value="ECO:0000270"/>
    <property type="project" value="UniProtKB"/>
</dbReference>
<dbReference type="GO" id="GO:0140861">
    <property type="term" value="P:DNA repair-dependent chromatin remodeling"/>
    <property type="evidence" value="ECO:0007669"/>
    <property type="project" value="Ensembl"/>
</dbReference>
<dbReference type="GO" id="GO:0000731">
    <property type="term" value="P:DNA synthesis involved in DNA repair"/>
    <property type="evidence" value="ECO:0000315"/>
    <property type="project" value="UniProtKB"/>
</dbReference>
<dbReference type="GO" id="GO:0097009">
    <property type="term" value="P:energy homeostasis"/>
    <property type="evidence" value="ECO:0000266"/>
    <property type="project" value="ComplexPortal"/>
</dbReference>
<dbReference type="GO" id="GO:0055089">
    <property type="term" value="P:fatty acid homeostasis"/>
    <property type="evidence" value="ECO:0000315"/>
    <property type="project" value="UniProtKB"/>
</dbReference>
<dbReference type="GO" id="GO:0031507">
    <property type="term" value="P:heterochromatin formation"/>
    <property type="evidence" value="ECO:0000316"/>
    <property type="project" value="MGI"/>
</dbReference>
<dbReference type="GO" id="GO:0001678">
    <property type="term" value="P:intracellular glucose homeostasis"/>
    <property type="evidence" value="ECO:0000315"/>
    <property type="project" value="UniProtKB"/>
</dbReference>
<dbReference type="GO" id="GO:0035356">
    <property type="term" value="P:intracellular triglyceride homeostasis"/>
    <property type="evidence" value="ECO:0000315"/>
    <property type="project" value="UniProtKB"/>
</dbReference>
<dbReference type="GO" id="GO:0008630">
    <property type="term" value="P:intrinsic apoptotic signaling pathway in response to DNA damage"/>
    <property type="evidence" value="ECO:0000314"/>
    <property type="project" value="UniProtKB"/>
</dbReference>
<dbReference type="GO" id="GO:0042771">
    <property type="term" value="P:intrinsic apoptotic signaling pathway in response to DNA damage by p53 class mediator"/>
    <property type="evidence" value="ECO:0000250"/>
    <property type="project" value="UniProtKB"/>
</dbReference>
<dbReference type="GO" id="GO:0033210">
    <property type="term" value="P:leptin-mediated signaling pathway"/>
    <property type="evidence" value="ECO:0000315"/>
    <property type="project" value="UniProtKB"/>
</dbReference>
<dbReference type="GO" id="GO:0030225">
    <property type="term" value="P:macrophage differentiation"/>
    <property type="evidence" value="ECO:0000315"/>
    <property type="project" value="UniProtKB"/>
</dbReference>
<dbReference type="GO" id="GO:0051658">
    <property type="term" value="P:maintenance of nucleus location"/>
    <property type="evidence" value="ECO:0007669"/>
    <property type="project" value="Ensembl"/>
</dbReference>
<dbReference type="GO" id="GO:0007517">
    <property type="term" value="P:muscle organ development"/>
    <property type="evidence" value="ECO:0007669"/>
    <property type="project" value="UniProtKB-KW"/>
</dbReference>
<dbReference type="GO" id="GO:0060766">
    <property type="term" value="P:negative regulation of androgen receptor signaling pathway"/>
    <property type="evidence" value="ECO:0007669"/>
    <property type="project" value="Ensembl"/>
</dbReference>
<dbReference type="GO" id="GO:0043066">
    <property type="term" value="P:negative regulation of apoptotic process"/>
    <property type="evidence" value="ECO:0000250"/>
    <property type="project" value="UniProtKB"/>
</dbReference>
<dbReference type="GO" id="GO:0043124">
    <property type="term" value="P:negative regulation of canonical NF-kappaB signal transduction"/>
    <property type="evidence" value="ECO:0000250"/>
    <property type="project" value="UniProtKB"/>
</dbReference>
<dbReference type="GO" id="GO:0045786">
    <property type="term" value="P:negative regulation of cell cycle"/>
    <property type="evidence" value="ECO:0000266"/>
    <property type="project" value="ComplexPortal"/>
</dbReference>
<dbReference type="GO" id="GO:2000655">
    <property type="term" value="P:negative regulation of cellular response to testosterone stimulus"/>
    <property type="evidence" value="ECO:0007669"/>
    <property type="project" value="Ensembl"/>
</dbReference>
<dbReference type="GO" id="GO:2000773">
    <property type="term" value="P:negative regulation of cellular senescence"/>
    <property type="evidence" value="ECO:0000250"/>
    <property type="project" value="UniProtKB"/>
</dbReference>
<dbReference type="GO" id="GO:0043518">
    <property type="term" value="P:negative regulation of DNA damage response, signal transduction by p53 class mediator"/>
    <property type="evidence" value="ECO:0000250"/>
    <property type="project" value="BHF-UCL"/>
</dbReference>
<dbReference type="GO" id="GO:0043433">
    <property type="term" value="P:negative regulation of DNA-binding transcription factor activity"/>
    <property type="evidence" value="ECO:0000315"/>
    <property type="project" value="ParkinsonsUK-UCL"/>
</dbReference>
<dbReference type="GO" id="GO:0045892">
    <property type="term" value="P:negative regulation of DNA-templated transcription"/>
    <property type="evidence" value="ECO:0000314"/>
    <property type="project" value="MGI"/>
</dbReference>
<dbReference type="GO" id="GO:0045599">
    <property type="term" value="P:negative regulation of fat cell differentiation"/>
    <property type="evidence" value="ECO:0000315"/>
    <property type="project" value="BHF-UCL"/>
</dbReference>
<dbReference type="GO" id="GO:0035331">
    <property type="term" value="P:negative regulation of hippo signaling"/>
    <property type="evidence" value="ECO:0007669"/>
    <property type="project" value="Ensembl"/>
</dbReference>
<dbReference type="GO" id="GO:1902166">
    <property type="term" value="P:negative regulation of intrinsic apoptotic signaling pathway in response to DNA damage by p53 class mediator"/>
    <property type="evidence" value="ECO:0000315"/>
    <property type="project" value="BHF-UCL"/>
</dbReference>
<dbReference type="GO" id="GO:0043524">
    <property type="term" value="P:negative regulation of neuron apoptotic process"/>
    <property type="evidence" value="ECO:0000316"/>
    <property type="project" value="MGI"/>
</dbReference>
<dbReference type="GO" id="GO:0032088">
    <property type="term" value="P:negative regulation of NF-kappaB transcription factor activity"/>
    <property type="evidence" value="ECO:0000250"/>
    <property type="project" value="UniProtKB"/>
</dbReference>
<dbReference type="GO" id="GO:1902176">
    <property type="term" value="P:negative regulation of oxidative stress-induced intrinsic apoptotic signaling pathway"/>
    <property type="evidence" value="ECO:0007669"/>
    <property type="project" value="Ensembl"/>
</dbReference>
<dbReference type="GO" id="GO:2000757">
    <property type="term" value="P:negative regulation of peptidyl-lysine acetylation"/>
    <property type="evidence" value="ECO:0000250"/>
    <property type="project" value="UniProtKB"/>
</dbReference>
<dbReference type="GO" id="GO:0051898">
    <property type="term" value="P:negative regulation of phosphatidylinositol 3-kinase/protein kinase B signal transduction"/>
    <property type="evidence" value="ECO:0000315"/>
    <property type="project" value="UniProtKB"/>
</dbReference>
<dbReference type="GO" id="GO:0042326">
    <property type="term" value="P:negative regulation of phosphorylation"/>
    <property type="evidence" value="ECO:0000315"/>
    <property type="project" value="UniProtKB"/>
</dbReference>
<dbReference type="GO" id="GO:0031393">
    <property type="term" value="P:negative regulation of prostaglandin biosynthetic process"/>
    <property type="evidence" value="ECO:0000315"/>
    <property type="project" value="UniProtKB"/>
</dbReference>
<dbReference type="GO" id="GO:0032007">
    <property type="term" value="P:negative regulation of TOR signaling"/>
    <property type="evidence" value="ECO:0000315"/>
    <property type="project" value="UniProtKB"/>
</dbReference>
<dbReference type="GO" id="GO:0000122">
    <property type="term" value="P:negative regulation of transcription by RNA polymerase II"/>
    <property type="evidence" value="ECO:0000314"/>
    <property type="project" value="BHF-UCL"/>
</dbReference>
<dbReference type="GO" id="GO:0030512">
    <property type="term" value="P:negative regulation of transforming growth factor beta receptor signaling pathway"/>
    <property type="evidence" value="ECO:0000314"/>
    <property type="project" value="UniProtKB"/>
</dbReference>
<dbReference type="GO" id="GO:0010868">
    <property type="term" value="P:negative regulation of triglyceride biosynthetic process"/>
    <property type="evidence" value="ECO:0007669"/>
    <property type="project" value="Ensembl"/>
</dbReference>
<dbReference type="GO" id="GO:0001542">
    <property type="term" value="P:ovulation from ovarian follicle"/>
    <property type="evidence" value="ECO:0000315"/>
    <property type="project" value="MGI"/>
</dbReference>
<dbReference type="GO" id="GO:0002821">
    <property type="term" value="P:positive regulation of adaptive immune response"/>
    <property type="evidence" value="ECO:0000250"/>
    <property type="project" value="UniProtKB"/>
</dbReference>
<dbReference type="GO" id="GO:1904179">
    <property type="term" value="P:positive regulation of adipose tissue development"/>
    <property type="evidence" value="ECO:0000315"/>
    <property type="project" value="UniProtKB"/>
</dbReference>
<dbReference type="GO" id="GO:0045766">
    <property type="term" value="P:positive regulation of angiogenesis"/>
    <property type="evidence" value="ECO:0007669"/>
    <property type="project" value="Ensembl"/>
</dbReference>
<dbReference type="GO" id="GO:0043065">
    <property type="term" value="P:positive regulation of apoptotic process"/>
    <property type="evidence" value="ECO:0000315"/>
    <property type="project" value="UniProtKB"/>
</dbReference>
<dbReference type="GO" id="GO:0043536">
    <property type="term" value="P:positive regulation of blood vessel endothelial cell migration"/>
    <property type="evidence" value="ECO:0007669"/>
    <property type="project" value="Ensembl"/>
</dbReference>
<dbReference type="GO" id="GO:2000481">
    <property type="term" value="P:positive regulation of cAMP-dependent protein kinase activity"/>
    <property type="evidence" value="ECO:0000314"/>
    <property type="project" value="UniProtKB"/>
</dbReference>
<dbReference type="GO" id="GO:0008284">
    <property type="term" value="P:positive regulation of cell population proliferation"/>
    <property type="evidence" value="ECO:0000250"/>
    <property type="project" value="UniProtKB"/>
</dbReference>
<dbReference type="GO" id="GO:2000774">
    <property type="term" value="P:positive regulation of cellular senescence"/>
    <property type="evidence" value="ECO:0000250"/>
    <property type="project" value="UniProtKB"/>
</dbReference>
<dbReference type="GO" id="GO:0010875">
    <property type="term" value="P:positive regulation of cholesterol efflux"/>
    <property type="evidence" value="ECO:0000315"/>
    <property type="project" value="UniProtKB"/>
</dbReference>
<dbReference type="GO" id="GO:0045739">
    <property type="term" value="P:positive regulation of DNA repair"/>
    <property type="evidence" value="ECO:0000250"/>
    <property type="project" value="UniProtKB"/>
</dbReference>
<dbReference type="GO" id="GO:2000781">
    <property type="term" value="P:positive regulation of double-strand break repair"/>
    <property type="evidence" value="ECO:0007669"/>
    <property type="project" value="Ensembl"/>
</dbReference>
<dbReference type="GO" id="GO:1902237">
    <property type="term" value="P:positive regulation of endoplasmic reticulum stress-induced intrinsic apoptotic signaling pathway"/>
    <property type="evidence" value="ECO:0000315"/>
    <property type="project" value="UniProtKB"/>
</dbReference>
<dbReference type="GO" id="GO:0001938">
    <property type="term" value="P:positive regulation of endothelial cell proliferation"/>
    <property type="evidence" value="ECO:0007669"/>
    <property type="project" value="Ensembl"/>
</dbReference>
<dbReference type="GO" id="GO:0045722">
    <property type="term" value="P:positive regulation of gluconeogenesis"/>
    <property type="evidence" value="ECO:0000315"/>
    <property type="project" value="UniProtKB"/>
</dbReference>
<dbReference type="GO" id="GO:0046628">
    <property type="term" value="P:positive regulation of insulin receptor signaling pathway"/>
    <property type="evidence" value="ECO:0000250"/>
    <property type="project" value="UniProtKB"/>
</dbReference>
<dbReference type="GO" id="GO:0016239">
    <property type="term" value="P:positive regulation of macroautophagy"/>
    <property type="evidence" value="ECO:0000314"/>
    <property type="project" value="UniProtKB"/>
</dbReference>
<dbReference type="GO" id="GO:2000111">
    <property type="term" value="P:positive regulation of macrophage apoptotic process"/>
    <property type="evidence" value="ECO:0000315"/>
    <property type="project" value="UniProtKB"/>
</dbReference>
<dbReference type="GO" id="GO:0060907">
    <property type="term" value="P:positive regulation of macrophage cytokine production"/>
    <property type="evidence" value="ECO:0000315"/>
    <property type="project" value="UniProtKB"/>
</dbReference>
<dbReference type="GO" id="GO:0045348">
    <property type="term" value="P:positive regulation of MHC class II biosynthetic process"/>
    <property type="evidence" value="ECO:0007669"/>
    <property type="project" value="Ensembl"/>
</dbReference>
<dbReference type="GO" id="GO:0051897">
    <property type="term" value="P:positive regulation of phosphatidylinositol 3-kinase/protein kinase B signal transduction"/>
    <property type="evidence" value="ECO:0000315"/>
    <property type="project" value="UniProtKB"/>
</dbReference>
<dbReference type="GO" id="GO:0032436">
    <property type="term" value="P:positive regulation of proteasomal ubiquitin-dependent protein catabolic process"/>
    <property type="evidence" value="ECO:0007669"/>
    <property type="project" value="Ensembl"/>
</dbReference>
<dbReference type="GO" id="GO:0001934">
    <property type="term" value="P:positive regulation of protein phosphorylation"/>
    <property type="evidence" value="ECO:0000315"/>
    <property type="project" value="UniProtKB"/>
</dbReference>
<dbReference type="GO" id="GO:0051152">
    <property type="term" value="P:positive regulation of smooth muscle cell differentiation"/>
    <property type="evidence" value="ECO:0000315"/>
    <property type="project" value="BHF-UCL"/>
</dbReference>
<dbReference type="GO" id="GO:0045944">
    <property type="term" value="P:positive regulation of transcription by RNA polymerase II"/>
    <property type="evidence" value="ECO:0000314"/>
    <property type="project" value="UniProtKB"/>
</dbReference>
<dbReference type="GO" id="GO:0043161">
    <property type="term" value="P:proteasome-mediated ubiquitin-dependent protein catabolic process"/>
    <property type="evidence" value="ECO:0000250"/>
    <property type="project" value="UniProtKB"/>
</dbReference>
<dbReference type="GO" id="GO:0006476">
    <property type="term" value="P:protein deacetylation"/>
    <property type="evidence" value="ECO:0000315"/>
    <property type="project" value="UniProtKB"/>
</dbReference>
<dbReference type="GO" id="GO:0106230">
    <property type="term" value="P:protein depropionylation"/>
    <property type="evidence" value="ECO:0000314"/>
    <property type="project" value="UniProtKB"/>
</dbReference>
<dbReference type="GO" id="GO:0031648">
    <property type="term" value="P:protein destabilization"/>
    <property type="evidence" value="ECO:0000314"/>
    <property type="project" value="UniProtKB"/>
</dbReference>
<dbReference type="GO" id="GO:0016567">
    <property type="term" value="P:protein ubiquitination"/>
    <property type="evidence" value="ECO:0000250"/>
    <property type="project" value="UniProtKB"/>
</dbReference>
<dbReference type="GO" id="GO:0000720">
    <property type="term" value="P:pyrimidine dimer repair by nucleotide-excision repair"/>
    <property type="evidence" value="ECO:0000315"/>
    <property type="project" value="UniProtKB"/>
</dbReference>
<dbReference type="GO" id="GO:0000183">
    <property type="term" value="P:rDNA heterochromatin formation"/>
    <property type="evidence" value="ECO:0000266"/>
    <property type="project" value="ComplexPortal"/>
</dbReference>
<dbReference type="GO" id="GO:0042981">
    <property type="term" value="P:regulation of apoptotic process"/>
    <property type="evidence" value="ECO:0000250"/>
    <property type="project" value="UniProtKB"/>
</dbReference>
<dbReference type="GO" id="GO:0070857">
    <property type="term" value="P:regulation of bile acid biosynthetic process"/>
    <property type="evidence" value="ECO:0000315"/>
    <property type="project" value="UniProtKB"/>
</dbReference>
<dbReference type="GO" id="GO:0090335">
    <property type="term" value="P:regulation of brown fat cell differentiation"/>
    <property type="evidence" value="ECO:0000315"/>
    <property type="project" value="UniProtKB"/>
</dbReference>
<dbReference type="GO" id="GO:0010824">
    <property type="term" value="P:regulation of centrosome duplication"/>
    <property type="evidence" value="ECO:0000250"/>
    <property type="project" value="UniProtKB"/>
</dbReference>
<dbReference type="GO" id="GO:0032071">
    <property type="term" value="P:regulation of endodeoxyribonuclease activity"/>
    <property type="evidence" value="ECO:0000250"/>
    <property type="project" value="UniProtKB"/>
</dbReference>
<dbReference type="GO" id="GO:0010906">
    <property type="term" value="P:regulation of glucose metabolic process"/>
    <property type="evidence" value="ECO:0000315"/>
    <property type="project" value="UniProtKB"/>
</dbReference>
<dbReference type="GO" id="GO:0010883">
    <property type="term" value="P:regulation of lipid storage"/>
    <property type="evidence" value="ECO:0000315"/>
    <property type="project" value="UniProtKB"/>
</dbReference>
<dbReference type="GO" id="GO:0007346">
    <property type="term" value="P:regulation of mitotic cell cycle"/>
    <property type="evidence" value="ECO:0000250"/>
    <property type="project" value="UniProtKB"/>
</dbReference>
<dbReference type="GO" id="GO:0035358">
    <property type="term" value="P:regulation of peroxisome proliferator activated receptor signaling pathway"/>
    <property type="evidence" value="ECO:0000315"/>
    <property type="project" value="BHF-UCL"/>
</dbReference>
<dbReference type="GO" id="GO:0034391">
    <property type="term" value="P:regulation of smooth muscle cell apoptotic process"/>
    <property type="evidence" value="ECO:0000314"/>
    <property type="project" value="UniProtKB"/>
</dbReference>
<dbReference type="GO" id="GO:0046015">
    <property type="term" value="P:regulation of transcription by glucose"/>
    <property type="evidence" value="ECO:0000266"/>
    <property type="project" value="ComplexPortal"/>
</dbReference>
<dbReference type="GO" id="GO:0042542">
    <property type="term" value="P:response to hydrogen peroxide"/>
    <property type="evidence" value="ECO:0000250"/>
    <property type="project" value="UniProtKB"/>
</dbReference>
<dbReference type="GO" id="GO:0032868">
    <property type="term" value="P:response to insulin"/>
    <property type="evidence" value="ECO:0000314"/>
    <property type="project" value="UniProtKB"/>
</dbReference>
<dbReference type="GO" id="GO:0044321">
    <property type="term" value="P:response to leptin"/>
    <property type="evidence" value="ECO:0000315"/>
    <property type="project" value="UniProtKB"/>
</dbReference>
<dbReference type="GO" id="GO:0000012">
    <property type="term" value="P:single strand break repair"/>
    <property type="evidence" value="ECO:0000250"/>
    <property type="project" value="UniProtKB"/>
</dbReference>
<dbReference type="GO" id="GO:0007283">
    <property type="term" value="P:spermatogenesis"/>
    <property type="evidence" value="ECO:0000315"/>
    <property type="project" value="MGI"/>
</dbReference>
<dbReference type="GO" id="GO:0090400">
    <property type="term" value="P:stress-induced premature senescence"/>
    <property type="evidence" value="ECO:0007669"/>
    <property type="project" value="Ensembl"/>
</dbReference>
<dbReference type="GO" id="GO:0007179">
    <property type="term" value="P:transforming growth factor beta receptor signaling pathway"/>
    <property type="evidence" value="ECO:0007669"/>
    <property type="project" value="Ensembl"/>
</dbReference>
<dbReference type="GO" id="GO:0006642">
    <property type="term" value="P:triglyceride mobilization"/>
    <property type="evidence" value="ECO:0000315"/>
    <property type="project" value="BHF-UCL"/>
</dbReference>
<dbReference type="GO" id="GO:0070914">
    <property type="term" value="P:UV-damage excision repair"/>
    <property type="evidence" value="ECO:0007669"/>
    <property type="project" value="Ensembl"/>
</dbReference>
<dbReference type="GO" id="GO:0050872">
    <property type="term" value="P:white fat cell differentiation"/>
    <property type="evidence" value="ECO:0000315"/>
    <property type="project" value="BHF-UCL"/>
</dbReference>
<dbReference type="CDD" id="cd01408">
    <property type="entry name" value="SIRT1"/>
    <property type="match status" value="1"/>
</dbReference>
<dbReference type="FunFam" id="3.30.1600.10:FF:000013">
    <property type="entry name" value="NAD-dependent protein deacetylase sirtuin-1"/>
    <property type="match status" value="2"/>
</dbReference>
<dbReference type="Gene3D" id="3.30.1600.10">
    <property type="entry name" value="SIR2/SIRT2 'Small Domain"/>
    <property type="match status" value="1"/>
</dbReference>
<dbReference type="Gene3D" id="3.40.50.1220">
    <property type="entry name" value="TPP-binding domain"/>
    <property type="match status" value="1"/>
</dbReference>
<dbReference type="InterPro" id="IPR029035">
    <property type="entry name" value="DHS-like_NAD/FAD-binding_dom"/>
</dbReference>
<dbReference type="InterPro" id="IPR050134">
    <property type="entry name" value="NAD-dep_sirtuin_deacylases"/>
</dbReference>
<dbReference type="InterPro" id="IPR003000">
    <property type="entry name" value="Sirtuin"/>
</dbReference>
<dbReference type="InterPro" id="IPR026591">
    <property type="entry name" value="Sirtuin_cat_small_dom_sf"/>
</dbReference>
<dbReference type="InterPro" id="IPR026590">
    <property type="entry name" value="Ssirtuin_cat_dom"/>
</dbReference>
<dbReference type="PANTHER" id="PTHR11085:SF9">
    <property type="entry name" value="NAD-DEPENDENT PROTEIN DEACETYLASE SIRTUIN-1"/>
    <property type="match status" value="1"/>
</dbReference>
<dbReference type="PANTHER" id="PTHR11085">
    <property type="entry name" value="NAD-DEPENDENT PROTEIN DEACYLASE SIRTUIN-5, MITOCHONDRIAL-RELATED"/>
    <property type="match status" value="1"/>
</dbReference>
<dbReference type="Pfam" id="PF02146">
    <property type="entry name" value="SIR2"/>
    <property type="match status" value="1"/>
</dbReference>
<dbReference type="SUPFAM" id="SSF52467">
    <property type="entry name" value="DHS-like NAD/FAD-binding domain"/>
    <property type="match status" value="1"/>
</dbReference>
<dbReference type="PROSITE" id="PS50305">
    <property type="entry name" value="SIRTUIN"/>
    <property type="match status" value="1"/>
</dbReference>
<organism>
    <name type="scientific">Mus musculus</name>
    <name type="common">Mouse</name>
    <dbReference type="NCBI Taxonomy" id="10090"/>
    <lineage>
        <taxon>Eukaryota</taxon>
        <taxon>Metazoa</taxon>
        <taxon>Chordata</taxon>
        <taxon>Craniata</taxon>
        <taxon>Vertebrata</taxon>
        <taxon>Euteleostomi</taxon>
        <taxon>Mammalia</taxon>
        <taxon>Eutheria</taxon>
        <taxon>Euarchontoglires</taxon>
        <taxon>Glires</taxon>
        <taxon>Rodentia</taxon>
        <taxon>Myomorpha</taxon>
        <taxon>Muroidea</taxon>
        <taxon>Muridae</taxon>
        <taxon>Murinae</taxon>
        <taxon>Mus</taxon>
        <taxon>Mus</taxon>
    </lineage>
</organism>
<protein>
    <recommendedName>
        <fullName>NAD-dependent protein deacetylase sirtuin-1</fullName>
        <ecNumber evidence="4 43 58">2.3.1.286</ecNumber>
    </recommendedName>
    <alternativeName>
        <fullName evidence="62">NAD-dependent protein deacylase sirtuin-1</fullName>
        <ecNumber evidence="64">2.3.1.-</ecNumber>
    </alternativeName>
    <alternativeName>
        <fullName>Regulatory protein SIR2 homolog 1</fullName>
    </alternativeName>
    <alternativeName>
        <fullName>SIR2-like protein 1</fullName>
    </alternativeName>
    <alternativeName>
        <fullName>SIR2alpha</fullName>
        <shortName>Sir2</shortName>
        <shortName>mSIR2a</shortName>
    </alternativeName>
    <component>
        <recommendedName>
            <fullName>SirtT1 75 kDa fragment</fullName>
            <shortName>75SirT1</shortName>
        </recommendedName>
    </component>
</protein>
<name>SIR1_MOUSE</name>
<feature type="initiator methionine" description="Removed" evidence="3">
    <location>
        <position position="1"/>
    </location>
</feature>
<feature type="chain" id="PRO_0000110257" description="NAD-dependent protein deacetylase sirtuin-1">
    <location>
        <begin position="2"/>
        <end position="737"/>
    </location>
</feature>
<feature type="chain" id="PRO_0000415290" description="SirtT1 75 kDa fragment" evidence="3">
    <location>
        <begin position="2"/>
        <end position="525"/>
    </location>
</feature>
<feature type="domain" description="Deacetylase sirtuin-type" evidence="4">
    <location>
        <begin position="228"/>
        <end position="488"/>
    </location>
</feature>
<feature type="region of interest" description="Disordered" evidence="5">
    <location>
        <begin position="1"/>
        <end position="56"/>
    </location>
</feature>
<feature type="region of interest" description="Interaction with H1-4" evidence="3">
    <location>
        <begin position="2"/>
        <end position="268"/>
    </location>
</feature>
<feature type="region of interest" description="Interaction with CLOCK" evidence="36">
    <location>
        <begin position="2"/>
        <end position="131"/>
    </location>
</feature>
<feature type="region of interest" description="Disordered" evidence="5">
    <location>
        <begin position="75"/>
        <end position="125"/>
    </location>
</feature>
<feature type="region of interest" description="Interaction with CCAR2" evidence="3">
    <location>
        <begin position="135"/>
        <end position="533"/>
    </location>
</feature>
<feature type="region of interest" description="Disordered" evidence="5">
    <location>
        <begin position="152"/>
        <end position="171"/>
    </location>
</feature>
<feature type="region of interest" description="Required for interaction with the sumoylated form of CCAR2" evidence="3">
    <location>
        <begin position="248"/>
        <end position="251"/>
    </location>
</feature>
<feature type="region of interest" description="Disordered" evidence="5">
    <location>
        <begin position="514"/>
        <end position="539"/>
    </location>
</feature>
<feature type="region of interest" description="Disordered" evidence="5">
    <location>
        <begin position="653"/>
        <end position="713"/>
    </location>
</feature>
<feature type="short sequence motif" description="Nuclear localization signal">
    <location>
        <begin position="32"/>
        <end position="39"/>
    </location>
</feature>
<feature type="short sequence motif" description="Nuclear export signal">
    <location>
        <begin position="138"/>
        <end position="145"/>
    </location>
</feature>
<feature type="short sequence motif" description="Nuclear localization signal">
    <location>
        <begin position="223"/>
        <end position="230"/>
    </location>
</feature>
<feature type="short sequence motif" description="Nuclear export signal">
    <location>
        <begin position="425"/>
        <end position="431"/>
    </location>
</feature>
<feature type="compositionally biased region" description="Low complexity" evidence="5">
    <location>
        <begin position="1"/>
        <end position="28"/>
    </location>
</feature>
<feature type="compositionally biased region" description="Low complexity" evidence="5">
    <location>
        <begin position="46"/>
        <end position="56"/>
    </location>
</feature>
<feature type="compositionally biased region" description="Low complexity" evidence="5">
    <location>
        <begin position="75"/>
        <end position="94"/>
    </location>
</feature>
<feature type="compositionally biased region" description="Acidic residues" evidence="5">
    <location>
        <begin position="111"/>
        <end position="123"/>
    </location>
</feature>
<feature type="compositionally biased region" description="Polar residues" evidence="5">
    <location>
        <begin position="529"/>
        <end position="539"/>
    </location>
</feature>
<feature type="compositionally biased region" description="Low complexity" evidence="5">
    <location>
        <begin position="656"/>
        <end position="676"/>
    </location>
</feature>
<feature type="compositionally biased region" description="Acidic residues" evidence="5">
    <location>
        <begin position="677"/>
        <end position="697"/>
    </location>
</feature>
<feature type="active site" description="Proton acceptor" evidence="4 7 10 13 23">
    <location>
        <position position="355"/>
    </location>
</feature>
<feature type="binding site" evidence="2">
    <location>
        <begin position="253"/>
        <end position="272"/>
    </location>
    <ligand>
        <name>NAD(+)</name>
        <dbReference type="ChEBI" id="CHEBI:57540"/>
    </ligand>
</feature>
<feature type="binding site" evidence="2">
    <location>
        <begin position="337"/>
        <end position="340"/>
    </location>
    <ligand>
        <name>NAD(+)</name>
        <dbReference type="ChEBI" id="CHEBI:57540"/>
    </ligand>
</feature>
<feature type="binding site" evidence="4">
    <location>
        <position position="363"/>
    </location>
    <ligand>
        <name>Zn(2+)</name>
        <dbReference type="ChEBI" id="CHEBI:29105"/>
    </ligand>
</feature>
<feature type="binding site" evidence="4">
    <location>
        <position position="366"/>
    </location>
    <ligand>
        <name>Zn(2+)</name>
        <dbReference type="ChEBI" id="CHEBI:29105"/>
    </ligand>
</feature>
<feature type="binding site" evidence="4">
    <location>
        <position position="387"/>
    </location>
    <ligand>
        <name>Zn(2+)</name>
        <dbReference type="ChEBI" id="CHEBI:29105"/>
    </ligand>
</feature>
<feature type="binding site" evidence="4">
    <location>
        <position position="390"/>
    </location>
    <ligand>
        <name>Zn(2+)</name>
        <dbReference type="ChEBI" id="CHEBI:29105"/>
    </ligand>
</feature>
<feature type="binding site" evidence="2">
    <location>
        <begin position="432"/>
        <end position="434"/>
    </location>
    <ligand>
        <name>NAD(+)</name>
        <dbReference type="ChEBI" id="CHEBI:57540"/>
    </ligand>
</feature>
<feature type="binding site" evidence="2">
    <location>
        <begin position="457"/>
        <end position="459"/>
    </location>
    <ligand>
        <name>NAD(+)</name>
        <dbReference type="ChEBI" id="CHEBI:57540"/>
    </ligand>
</feature>
<feature type="binding site" evidence="1">
    <location>
        <position position="474"/>
    </location>
    <ligand>
        <name>NAD(+)</name>
        <dbReference type="ChEBI" id="CHEBI:57540"/>
    </ligand>
</feature>
<feature type="modified residue" description="N-acetylalanine" evidence="3">
    <location>
        <position position="2"/>
    </location>
</feature>
<feature type="modified residue" description="Phosphoserine" evidence="3">
    <location>
        <position position="14"/>
    </location>
</feature>
<feature type="modified residue" description="Phosphoserine" evidence="3">
    <location>
        <position position="25"/>
    </location>
</feature>
<feature type="modified residue" description="Phosphoserine; by MAPK8" evidence="3">
    <location>
        <position position="46"/>
    </location>
</feature>
<feature type="modified residue" description="Phosphoserine" evidence="65">
    <location>
        <position position="151"/>
    </location>
</feature>
<feature type="modified residue" description="Phosphoserine" evidence="65">
    <location>
        <position position="154"/>
    </location>
</feature>
<feature type="modified residue" description="Phosphoserine" evidence="3">
    <location>
        <position position="164"/>
    </location>
</feature>
<feature type="modified residue" description="Phosphoserine" evidence="3">
    <location>
        <position position="165"/>
    </location>
</feature>
<feature type="modified residue" description="N6-acetyllysine" evidence="59">
    <location>
        <position position="230"/>
    </location>
</feature>
<feature type="modified residue" description="N6-acetyllysine" evidence="59">
    <location>
        <position position="369"/>
    </location>
</feature>
<feature type="modified residue" description="S-nitrosocysteine" evidence="48">
    <location>
        <position position="387"/>
    </location>
</feature>
<feature type="modified residue" description="S-nitrosocysteine" evidence="48">
    <location>
        <position position="390"/>
    </location>
</feature>
<feature type="modified residue" description="N6-acetyllysine" evidence="63">
    <location>
        <position position="422"/>
    </location>
</feature>
<feature type="modified residue" description="N6-acetyllysine" evidence="63">
    <location>
        <position position="505"/>
    </location>
</feature>
<feature type="modified residue" description="Phosphothreonine; by DYRK1A, DYRK3 and MAPK8" evidence="43">
    <location>
        <position position="522"/>
    </location>
</feature>
<feature type="modified residue" description="Phosphoserine" evidence="3">
    <location>
        <position position="527"/>
    </location>
</feature>
<feature type="modified residue" description="Phosphothreonine" evidence="3">
    <location>
        <position position="536"/>
    </location>
</feature>
<feature type="modified residue" description="N6-acetyllysine" evidence="63">
    <location>
        <position position="600"/>
    </location>
</feature>
<feature type="modified residue" description="Phosphoserine; by CaMK2" evidence="42">
    <location>
        <position position="649"/>
    </location>
</feature>
<feature type="modified residue" description="Phosphoserine; by CaMK2" evidence="3">
    <location>
        <position position="651"/>
    </location>
</feature>
<feature type="modified residue" description="Phosphoserine" evidence="3">
    <location>
        <position position="737"/>
    </location>
</feature>
<feature type="splice variant" id="VSP_042190" description="In isoform 2." evidence="62">
    <location>
        <begin position="446"/>
        <end position="629"/>
    </location>
</feature>
<feature type="mutagenesis site" description="Abolishes nuclear localization; when associated with A-227; A-228; A-229 and A-230.">
    <original>RR</original>
    <variation>AA</variation>
    <location>
        <begin position="37"/>
        <end position="38"/>
    </location>
</feature>
<feature type="mutagenesis site" description="Abolishes nuclear export; when associated with A-425; A-427; A-428; A-429; A-430 and A-431." evidence="25">
    <original>LLLTDGLL</original>
    <variation>AAATGAA</variation>
    <location>
        <begin position="138"/>
        <end position="145"/>
    </location>
</feature>
<feature type="mutagenesis site" description="Abolishes in vitro phosphorylation by CaMK2; when associated with A-649; A-651 and A-683." evidence="42">
    <original>S</original>
    <variation>A</variation>
    <location>
        <position position="154"/>
    </location>
</feature>
<feature type="mutagenesis site" description="Abolishes nuclear localization; when associated with A-37 and A-38." evidence="25">
    <original>KKRK</original>
    <variation>AAAA</variation>
    <location>
        <begin position="227"/>
        <end position="230"/>
    </location>
</feature>
<feature type="mutagenesis site" description="Decreased acetylation, leading to increased protein deacetylase activity." evidence="59">
    <original>K</original>
    <variation>R</variation>
    <location>
        <position position="230"/>
    </location>
</feature>
<feature type="mutagenesis site" description="Abolished ADP-ribosyltransferase activity in vitro without affecting the NAD-dependent protein deacetylase activity." evidence="15">
    <original>G</original>
    <variation>A</variation>
    <location>
        <position position="261"/>
    </location>
</feature>
<feature type="mutagenesis site" description="Loss of deacetylation activity. Loss of inhibition of E2F1 and loss of coactivation of FOXO1-mediated transcription." evidence="7 10 13 23">
    <original>H</original>
    <variation>Y</variation>
    <location>
        <position position="355"/>
    </location>
</feature>
<feature type="mutagenesis site" description="Does not affect S-nitrosylation." evidence="48">
    <original>C</original>
    <variation>S</variation>
    <location>
        <position position="363"/>
    </location>
</feature>
<feature type="mutagenesis site" description="Does not affect S-nitrosylation." evidence="48">
    <original>C</original>
    <variation>S</variation>
    <location>
        <position position="366"/>
    </location>
</feature>
<feature type="mutagenesis site" description="Does not affect protein deacetylase activity." evidence="59">
    <original>K</original>
    <variation>R</variation>
    <location>
        <position position="369"/>
    </location>
</feature>
<feature type="mutagenesis site" description="Impairs S-nitrosylation. Abolishes S-nitrosylation; when associated with S-390." evidence="48">
    <original>C</original>
    <variation>S</variation>
    <location>
        <position position="387"/>
    </location>
</feature>
<feature type="mutagenesis site" description="Impairs S-nitrosylation. Abolishes S-nitrosylation; when associated with S-387." evidence="48">
    <original>C</original>
    <variation>S</variation>
    <location>
        <position position="390"/>
    </location>
</feature>
<feature type="mutagenesis site" description="Abolishes nuclear export; when associated with A-138; A-139; A-140; A-144 and A-145." evidence="25">
    <original>VDLLIVI</original>
    <variation>ADAAAAA</variation>
    <location>
        <begin position="425"/>
        <end position="431"/>
    </location>
</feature>
<feature type="mutagenesis site" description="Does not affect protein deacetylase activity." evidence="59">
    <original>K</original>
    <variation>R</variation>
    <location>
        <position position="505"/>
    </location>
</feature>
<feature type="mutagenesis site" description="Increased deacetylase activity toward p53/TP53 and increases resistance to genotoxic stress (mimicks residue phosphorylation)." evidence="43">
    <original>T</original>
    <variation>D</variation>
    <location>
        <position position="522"/>
    </location>
</feature>
<feature type="mutagenesis site" description="Reduces phosphorylation. Impairs deacetylase activity toward p53/TP53 and decreases resistance to genotoxic stress. Does not change nuclear localization." evidence="43">
    <original>T</original>
    <variation>V</variation>
    <location>
        <position position="522"/>
    </location>
</feature>
<feature type="mutagenesis site" description="Does not affect protein deacetylase activity." evidence="59">
    <original>K</original>
    <variation>R</variation>
    <location>
        <position position="600"/>
    </location>
</feature>
<feature type="mutagenesis site" description="Abolishes in vitro phosphorylation by CaMK2; when associated with A-154; A-651 and A-683." evidence="42">
    <original>S</original>
    <variation>A</variation>
    <location>
        <position position="649"/>
    </location>
</feature>
<feature type="mutagenesis site" description="Abolishes in vitro phosphorylation by CaMK2; when associated with A-154; A-649 and A-683." evidence="42">
    <original>S</original>
    <variation>A</variation>
    <location>
        <position position="651"/>
    </location>
</feature>
<feature type="mutagenesis site" description="Abolishes in vitro phosphorylation by CaMK2; when associated with A-154; A-649 and A-651." evidence="42">
    <original>S</original>
    <variation>A</variation>
    <location>
        <position position="683"/>
    </location>
</feature>
<proteinExistence type="evidence at protein level"/>
<sequence length="737" mass="80372">MADEVALALQAAGSPSAAAAMEAASQPADEPLRKRPRRDGPGLGRSPGEPSAAVAPAAAGCEAASAAAPAALWREAAGAAASAEREAPATAVAGDGDNGSGLRREPRAADDFDDDEGEEEDEAAAAAAAAAIGYRDNLLLTDGLLTNGFHSCESDDDDRTSHASSSDWTPRPRIGPYTFVQQHLMIGTDPRTILKDLLPETIPPPELDDMTLWQIVINILSEPPKRKKRKDINTIEDAVKLLQECKKIIVLTGAGVSVSCGIPDFRSRDGIYARLAVDFPDLPDPQAMFDIEYFRKDPRPFFKFAKEIYPGQFQPSLCHKFIALSDKEGKLLRNYTQNIDTLEQVAGIQRILQCHGSFATASCLICKYKVDCEAVRGDIFNQVVPRCPRCPADEPLAIMKPEIVFFGENLPEQFHRAMKYDKDEVDLLIVIGSSLKVRPVALIPSSIPHEVPQILINREPLPHLHFDVELLGDCDVIINELCHRLGGEYAKLCCNPVKLSEITEKPPRPQKELVHLSELPPTPLHISEDSSSPERTVPQDSSVIATLVDQATNNNVNDLEVSESSCVEEKPQEVQTSRNVENINVENPDFKAVGSSTADKNERTSVAETVRKCWPNRLAKEQISKRLEGNQYLFVPPNRYIFHGAEVYSDSEDDVLSSSSCGSNSDSGTCQSPSLEEPLEDESEIEEFYNGLEDDTERPECAGGSGFGADGGDQEVVNEAIATRQELTDVNYPSDKS</sequence>
<evidence type="ECO:0000250" key="1"/>
<evidence type="ECO:0000250" key="2">
    <source>
        <dbReference type="UniProtKB" id="Q8IXJ6"/>
    </source>
</evidence>
<evidence type="ECO:0000250" key="3">
    <source>
        <dbReference type="UniProtKB" id="Q96EB6"/>
    </source>
</evidence>
<evidence type="ECO:0000255" key="4">
    <source>
        <dbReference type="PROSITE-ProRule" id="PRU00236"/>
    </source>
</evidence>
<evidence type="ECO:0000256" key="5">
    <source>
        <dbReference type="SAM" id="MobiDB-lite"/>
    </source>
</evidence>
<evidence type="ECO:0000269" key="6">
    <source>
    </source>
</evidence>
<evidence type="ECO:0000269" key="7">
    <source>
    </source>
</evidence>
<evidence type="ECO:0000269" key="8">
    <source>
    </source>
</evidence>
<evidence type="ECO:0000269" key="9">
    <source>
    </source>
</evidence>
<evidence type="ECO:0000269" key="10">
    <source>
    </source>
</evidence>
<evidence type="ECO:0000269" key="11">
    <source>
    </source>
</evidence>
<evidence type="ECO:0000269" key="12">
    <source>
    </source>
</evidence>
<evidence type="ECO:0000269" key="13">
    <source>
    </source>
</evidence>
<evidence type="ECO:0000269" key="14">
    <source>
    </source>
</evidence>
<evidence type="ECO:0000269" key="15">
    <source>
    </source>
</evidence>
<evidence type="ECO:0000269" key="16">
    <source>
    </source>
</evidence>
<evidence type="ECO:0000269" key="17">
    <source>
    </source>
</evidence>
<evidence type="ECO:0000269" key="18">
    <source>
    </source>
</evidence>
<evidence type="ECO:0000269" key="19">
    <source>
    </source>
</evidence>
<evidence type="ECO:0000269" key="20">
    <source>
    </source>
</evidence>
<evidence type="ECO:0000269" key="21">
    <source>
    </source>
</evidence>
<evidence type="ECO:0000269" key="22">
    <source>
    </source>
</evidence>
<evidence type="ECO:0000269" key="23">
    <source>
    </source>
</evidence>
<evidence type="ECO:0000269" key="24">
    <source>
    </source>
</evidence>
<evidence type="ECO:0000269" key="25">
    <source>
    </source>
</evidence>
<evidence type="ECO:0000269" key="26">
    <source>
    </source>
</evidence>
<evidence type="ECO:0000269" key="27">
    <source>
    </source>
</evidence>
<evidence type="ECO:0000269" key="28">
    <source>
    </source>
</evidence>
<evidence type="ECO:0000269" key="29">
    <source>
    </source>
</evidence>
<evidence type="ECO:0000269" key="30">
    <source>
    </source>
</evidence>
<evidence type="ECO:0000269" key="31">
    <source>
    </source>
</evidence>
<evidence type="ECO:0000269" key="32">
    <source>
    </source>
</evidence>
<evidence type="ECO:0000269" key="33">
    <source>
    </source>
</evidence>
<evidence type="ECO:0000269" key="34">
    <source>
    </source>
</evidence>
<evidence type="ECO:0000269" key="35">
    <source>
    </source>
</evidence>
<evidence type="ECO:0000269" key="36">
    <source>
    </source>
</evidence>
<evidence type="ECO:0000269" key="37">
    <source>
    </source>
</evidence>
<evidence type="ECO:0000269" key="38">
    <source>
    </source>
</evidence>
<evidence type="ECO:0000269" key="39">
    <source>
    </source>
</evidence>
<evidence type="ECO:0000269" key="40">
    <source>
    </source>
</evidence>
<evidence type="ECO:0000269" key="41">
    <source>
    </source>
</evidence>
<evidence type="ECO:0000269" key="42">
    <source>
    </source>
</evidence>
<evidence type="ECO:0000269" key="43">
    <source>
    </source>
</evidence>
<evidence type="ECO:0000269" key="44">
    <source>
    </source>
</evidence>
<evidence type="ECO:0000269" key="45">
    <source>
    </source>
</evidence>
<evidence type="ECO:0000269" key="46">
    <source>
    </source>
</evidence>
<evidence type="ECO:0000269" key="47">
    <source>
    </source>
</evidence>
<evidence type="ECO:0000269" key="48">
    <source>
    </source>
</evidence>
<evidence type="ECO:0000269" key="49">
    <source>
    </source>
</evidence>
<evidence type="ECO:0000269" key="50">
    <source>
    </source>
</evidence>
<evidence type="ECO:0000269" key="51">
    <source>
    </source>
</evidence>
<evidence type="ECO:0000269" key="52">
    <source>
    </source>
</evidence>
<evidence type="ECO:0000269" key="53">
    <source>
    </source>
</evidence>
<evidence type="ECO:0000269" key="54">
    <source>
    </source>
</evidence>
<evidence type="ECO:0000269" key="55">
    <source>
    </source>
</evidence>
<evidence type="ECO:0000269" key="56">
    <source>
    </source>
</evidence>
<evidence type="ECO:0000269" key="57">
    <source>
    </source>
</evidence>
<evidence type="ECO:0000269" key="58">
    <source>
    </source>
</evidence>
<evidence type="ECO:0000269" key="59">
    <source>
    </source>
</evidence>
<evidence type="ECO:0000269" key="60">
    <source>
    </source>
</evidence>
<evidence type="ECO:0000269" key="61">
    <source>
    </source>
</evidence>
<evidence type="ECO:0000305" key="62"/>
<evidence type="ECO:0000305" key="63">
    <source>
    </source>
</evidence>
<evidence type="ECO:0000305" key="64">
    <source>
    </source>
</evidence>
<evidence type="ECO:0007744" key="65">
    <source>
    </source>
</evidence>
<accession>Q923E4</accession>
<accession>Q9QXG8</accession>
<reference key="1">
    <citation type="journal article" date="2000" name="Nature">
        <title>Transcriptional silencing and longevity protein Sir2 is an NAD-dependent histone deacetylase.</title>
        <authorList>
            <person name="Imai S."/>
            <person name="Armstrong C.M."/>
            <person name="Kaeberlein M."/>
            <person name="Guarente L."/>
        </authorList>
    </citation>
    <scope>NUCLEOTIDE SEQUENCE [MRNA]</scope>
    <source>
        <strain>Swiss Webster / NIH</strain>
    </source>
</reference>
<reference key="2">
    <citation type="journal article" date="2004" name="Genome Res.">
        <title>The status, quality, and expansion of the NIH full-length cDNA project: the Mammalian Gene Collection (MGC).</title>
        <authorList>
            <consortium name="The MGC Project Team"/>
        </authorList>
    </citation>
    <scope>NUCLEOTIDE SEQUENCE [LARGE SCALE MRNA] OF 545-737</scope>
    <source>
        <tissue>Mammary tumor</tissue>
    </source>
</reference>
<reference key="3">
    <citation type="journal article" date="2001" name="Cell">
        <title>Negative control of p53 by Sir2alpha promotes cell survival under stress.</title>
        <authorList>
            <person name="Luo J."/>
            <person name="Nikolaev A.Y."/>
            <person name="Imai S."/>
            <person name="Chen D."/>
            <person name="Su F."/>
            <person name="Shiloh A."/>
            <person name="Guarente L."/>
            <person name="Gu W."/>
        </authorList>
    </citation>
    <scope>FUNCTION</scope>
    <scope>INTERACTION WITH TP53</scope>
    <scope>ACTIVITY REGULATION</scope>
    <scope>ACTIVE SITE</scope>
    <scope>MUTAGENESIS OF HIS-355</scope>
</reference>
<reference key="4">
    <citation type="journal article" date="2001" name="EMBO J.">
        <title>Acetylation of TAF(I)68, a subunit of TIF-IB/SL1, activates RNA polymerase I transcription.</title>
        <authorList>
            <person name="Muth V."/>
            <person name="Nadaud S."/>
            <person name="Grummt I."/>
            <person name="Voit R."/>
        </authorList>
    </citation>
    <scope>FUNCTION IN DEACETYLATION OF TAF1B</scope>
</reference>
<reference key="5">
    <citation type="journal article" date="2003" name="Mol. Cancer Res.">
        <title>The absence of SIR2alpha protein has no effect on global gene silencing in mouse embryonic stem cells.</title>
        <authorList>
            <person name="McBurney M.W."/>
            <person name="Yang X."/>
            <person name="Jardine K."/>
            <person name="Bieman M."/>
            <person name="Th'ng J."/>
            <person name="Lemieux M."/>
        </authorList>
    </citation>
    <scope>FUNCTION</scope>
</reference>
<reference key="6">
    <citation type="journal article" date="2003" name="Mol. Cell. Biol.">
        <title>The mammalian SIR2alpha protein has a role in embryogenesis and gametogenesis.</title>
        <authorList>
            <person name="McBurney M.W."/>
            <person name="Yang X."/>
            <person name="Jardine K."/>
            <person name="Hixon M."/>
            <person name="Boekelheide K."/>
            <person name="Webb J.R."/>
            <person name="Lansdorp P.M."/>
            <person name="Lemieux M."/>
        </authorList>
    </citation>
    <scope>TISSUE SPECIFICITY</scope>
    <scope>DISRUPTION PHENOTYPE</scope>
</reference>
<reference key="7">
    <citation type="journal article" date="2003" name="Mol. Cell">
        <title>Sir2 regulates skeletal muscle differentiation as a potential sensor of the redox state.</title>
        <authorList>
            <person name="Fulco M."/>
            <person name="Schiltz R.L."/>
            <person name="Iezzi S."/>
            <person name="King M.T."/>
            <person name="Zhao P."/>
            <person name="Kashiwaya Y."/>
            <person name="Hoffman E."/>
            <person name="Veech R.L."/>
            <person name="Sartorelli V."/>
        </authorList>
    </citation>
    <scope>FUNCTION</scope>
    <scope>INTERACTION WITH MYOD1 AND PCAF</scope>
    <scope>MUTAGENESIS OF HIS-355</scope>
    <scope>ACTIVE SITE</scope>
</reference>
<reference key="8">
    <citation type="journal article" date="2003" name="Proc. Natl. Acad. Sci. U.S.A.">
        <title>Developmental defects and p53 hyperacetylation in Sir2 homolog (SIRT1)-deficient mice.</title>
        <authorList>
            <person name="Cheng H.-L."/>
            <person name="Mostoslavsky R."/>
            <person name="Saito S."/>
            <person name="Manis J.P."/>
            <person name="Gu Y."/>
            <person name="Patel P."/>
            <person name="Bronson R."/>
            <person name="Appella E."/>
            <person name="Alt F.W."/>
            <person name="Chua K.F."/>
        </authorList>
    </citation>
    <scope>FUNCTION</scope>
</reference>
<reference key="9">
    <citation type="journal article" date="2004" name="Nature">
        <title>Sirt1 promotes fat mobilization in white adipocytes by repressing PPAR-gamma.</title>
        <authorList>
            <person name="Picard F."/>
            <person name="Kurtev M."/>
            <person name="Chung N."/>
            <person name="Topark-Ngarm A."/>
            <person name="Senawong T."/>
            <person name="Machado De Oliveira R."/>
            <person name="Leid M."/>
            <person name="McBurney M.W."/>
            <person name="Guarente L."/>
        </authorList>
    </citation>
    <scope>FUNCTION IN ADIPODIGENESIS</scope>
    <scope>FUNCTION IN FAT MOBILIZATION</scope>
    <scope>INTERACTION WITH PPARG AND NCOR1</scope>
</reference>
<reference key="10">
    <citation type="journal article" date="2005" name="J. Biol. Chem.">
        <title>SIRT1 functionally interacts with the metabolic regulator and transcriptional coactivator PGC-1{alpha}.</title>
        <authorList>
            <person name="Nemoto S."/>
            <person name="Fergusson M.M."/>
            <person name="Finkel T."/>
        </authorList>
    </citation>
    <scope>FUNCTION IN DEACETYLATION OF PPARGC1A</scope>
    <scope>MUTAGENESIS OF GLY-261</scope>
</reference>
<reference key="11">
    <citation type="journal article" date="2006" name="Proc. Natl. Acad. Sci. U.S.A.">
        <title>Sirtuins deacetylate and activate mammalian acetyl-CoA synthetases.</title>
        <authorList>
            <person name="Hallows W.C."/>
            <person name="Lee S."/>
            <person name="Denu J.M."/>
        </authorList>
    </citation>
    <scope>FUNCTION IN DEACETYLATION OF ACSS2</scope>
    <scope>FUNCTION IN REGULATION OF ACCS2</scope>
</reference>
<reference key="12">
    <citation type="journal article" date="2007" name="Mol. Cell">
        <title>SIRT1 deacetylates and positively regulates the nuclear receptor LXR.</title>
        <authorList>
            <person name="Li X."/>
            <person name="Zhang S."/>
            <person name="Blander G."/>
            <person name="Tse J.G."/>
            <person name="Krieger M."/>
            <person name="Guarente L."/>
        </authorList>
    </citation>
    <scope>FUNCTION IN DEACETYLATION OF NR1H3 AND NR1H2</scope>
    <scope>FUNCTION IN REGULATION OF NR1H3</scope>
</reference>
<reference key="13">
    <citation type="journal article" date="2008" name="Cell Stem Cell">
        <title>SIRT1 regulates apoptosis and Nanog expression in mouse embryonic stem cells by controlling p53 subcellular localization.</title>
        <authorList>
            <person name="Han M.K."/>
            <person name="Song E.K."/>
            <person name="Guo Y."/>
            <person name="Ou X."/>
            <person name="Mantel C."/>
            <person name="Broxmeyer H.E."/>
        </authorList>
    </citation>
    <scope>FUNCTION IN APOPTOSIS</scope>
</reference>
<reference key="14">
    <citation type="journal article" date="2004" name="Proc. Natl. Acad. Sci. U.S.A.">
        <title>Silent information regulator 2 potentiates Foxo1-mediated transcription through its deacetylase activity.</title>
        <authorList>
            <person name="Daitoku H."/>
            <person name="Hatta M."/>
            <person name="Matsuzaki H."/>
            <person name="Aratani S."/>
            <person name="Ohshima T."/>
            <person name="Miyagishi M."/>
            <person name="Nakajima T."/>
            <person name="Fukamizu A."/>
        </authorList>
    </citation>
    <scope>INTERACTION WITH FOXO1</scope>
    <scope>FUNCTION IN DEACETYLATION OF FOXO1</scope>
    <scope>MUTAGENESIS OF HIS-355</scope>
    <scope>ACTIVE SITE</scope>
</reference>
<reference key="15">
    <citation type="journal article" date="2005" name="Cell">
        <title>Tumor suppressor HIC1 directly regulates SIRT1 to modulate p53-dependent DNA-damage responses.</title>
        <authorList>
            <person name="Chen W.Y."/>
            <person name="Wang D.H."/>
            <person name="Yen R.C."/>
            <person name="Luo J."/>
            <person name="Gu W."/>
            <person name="Baylin S.B."/>
        </authorList>
    </citation>
    <scope>INTERACTION WITH HIC1</scope>
</reference>
<reference key="16">
    <citation type="journal article" date="2005" name="Cell Metab.">
        <title>Increased dosage of mammalian Sir2 in pancreatic beta cells enhances glucose-stimulated insulin secretion in mice.</title>
        <authorList>
            <person name="Moynihan K.A."/>
            <person name="Grimm A.A."/>
            <person name="Plueger M.M."/>
            <person name="Bernal-Mizrachi E."/>
            <person name="Ford E."/>
            <person name="Cras-Meneur C."/>
            <person name="Permutt M.A."/>
            <person name="Imai S."/>
        </authorList>
    </citation>
    <scope>FUNCTION IN REGULATION OF INSULIN SECRETION</scope>
</reference>
<reference key="17">
    <citation type="journal article" date="2005" name="J. Biol. Chem.">
        <title>SIRT1 deacetylation and repression of p300 involves lysine residues 1020/1024 within the cell cycle regulatory domain 1.</title>
        <authorList>
            <person name="Bouras T."/>
            <person name="Fu M."/>
            <person name="Sauve A.A."/>
            <person name="Wang F."/>
            <person name="Quong A.A."/>
            <person name="Perkins N.D."/>
            <person name="Hay R.T."/>
            <person name="Gu W."/>
            <person name="Pestell R.G."/>
        </authorList>
    </citation>
    <scope>FUNCTION</scope>
</reference>
<reference key="18">
    <citation type="journal article" date="2005" name="J. Biol. Chem.">
        <title>Nuclear trapping of the forkhead transcription factor FoxO1 via Sirt-dependent deacetylation promotes expression of glucogenetic genes.</title>
        <authorList>
            <person name="Frescas D."/>
            <person name="Valenti L."/>
            <person name="Accili D."/>
        </authorList>
    </citation>
    <scope>FUNCTION IN REGULATION OF FOXO1</scope>
</reference>
<reference key="19">
    <citation type="journal article" date="2005" name="Nature">
        <title>Nutrient control of glucose homeostasis through a complex of PGC-1alpha and SIRT1.</title>
        <authorList>
            <person name="Rodgers J.T."/>
            <person name="Lerin C."/>
            <person name="Haas W."/>
            <person name="Gygi S.P."/>
            <person name="Spiegelman B.M."/>
            <person name="Puigserver P."/>
        </authorList>
    </citation>
    <scope>FUNCTION IN DEACETYLATION OF PPARGC1A</scope>
    <scope>FUNCTION IN REGULATION OF GLUCOSE HOMEOSTASIS</scope>
    <scope>INDUCTION</scope>
</reference>
<reference key="20">
    <citation type="journal article" date="2005" name="Science">
        <title>Calorie restriction promotes mitochondrial biogenesis by inducing the expression of eNOS.</title>
        <authorList>
            <person name="Nisoli E."/>
            <person name="Tonello C."/>
            <person name="Cardile A."/>
            <person name="Cozzi V."/>
            <person name="Bracale R."/>
            <person name="Tedesco L."/>
            <person name="Falcone S."/>
            <person name="Valerio A."/>
            <person name="Cantoni O."/>
            <person name="Clementi E."/>
            <person name="Moncada S."/>
            <person name="Carruba M.O."/>
        </authorList>
    </citation>
    <scope>INDUCTION</scope>
</reference>
<reference key="21">
    <citation type="journal article" date="2006" name="Nat. Cell Biol.">
        <title>Interactions between E2F1 and SirT1 regulate apoptotic response to DNA damage.</title>
        <authorList>
            <person name="Wang C."/>
            <person name="Chen L."/>
            <person name="Hou X."/>
            <person name="Li Z."/>
            <person name="Kabra N."/>
            <person name="Ma Y."/>
            <person name="Nemoto S."/>
            <person name="Finkel T."/>
            <person name="Gu W."/>
            <person name="Cress W.D."/>
            <person name="Chen J."/>
        </authorList>
    </citation>
    <scope>FUNCTION</scope>
    <scope>INTERACTION WITH E2F1</scope>
    <scope>MUTAGENESIS OF HIS-355</scope>
    <scope>ACTIVE SITE</scope>
</reference>
<reference key="22">
    <citation type="journal article" date="2006" name="PLoS Biol.">
        <title>Sirt1 regulates insulin secretion by repressing UCP2 in pancreatic beta cells.</title>
        <authorList>
            <person name="Bordone L."/>
            <person name="Motta M.C."/>
            <person name="Picard F."/>
            <person name="Robinson A."/>
            <person name="Jhala U.S."/>
            <person name="Apfeld J."/>
            <person name="McDonagh T."/>
            <person name="Lemieux M."/>
            <person name="McBurney M."/>
            <person name="Szilvasi A."/>
            <person name="Easlon E.J."/>
            <person name="Lin S.J."/>
            <person name="Guarente L."/>
        </authorList>
    </citation>
    <scope>FUNCTION IN REGULATION OF INSULIN SECRETION</scope>
</reference>
<reference key="23">
    <citation type="journal article" date="2007" name="Biochem. J.">
        <title>Deacetylation of the retinoblastoma tumour suppressor protein by SIRT1.</title>
        <authorList>
            <person name="Wong S."/>
            <person name="Weber J.D."/>
        </authorList>
    </citation>
    <scope>FUNCTION IN DEACETYLATION OF RB1</scope>
</reference>
<reference key="24">
    <citation type="journal article" date="2007" name="EMBO J.">
        <title>Metabolic control of muscle mitochondrial function and fatty acid oxidation through SIRT1/PGC-1alpha.</title>
        <authorList>
            <person name="Gerhart-Hines Z."/>
            <person name="Rodgers J.T."/>
            <person name="Bare O."/>
            <person name="Lerin C."/>
            <person name="Kim S.H."/>
            <person name="Mostoslavsky R."/>
            <person name="Alt F.W."/>
            <person name="Wu Z."/>
            <person name="Puigserver P."/>
        </authorList>
    </citation>
    <scope>FUNCTION IN DEACETYLATION OF PPARGC1A</scope>
    <scope>FUNCTION IN REGULATION OF MUSCLE METABOLISM</scope>
</reference>
<reference key="25">
    <citation type="journal article" date="2007" name="J. Biol. Chem.">
        <title>SIRT1 inhibits transforming growth factor beta-induced apoptosis in glomerular mesangial cells via Smad7 deacetylation.</title>
        <authorList>
            <person name="Kume S."/>
            <person name="Haneda M."/>
            <person name="Kanasaki K."/>
            <person name="Sugimoto T."/>
            <person name="Araki S."/>
            <person name="Isshiki K."/>
            <person name="Isono M."/>
            <person name="Uzu T."/>
            <person name="Guarente L."/>
            <person name="Kashiwagi A."/>
            <person name="Koya D."/>
        </authorList>
    </citation>
    <scope>FUNCTION IN DEACETYLATION OF SMAD7</scope>
</reference>
<reference key="26">
    <citation type="journal article" date="2007" name="J. Biol. Chem.">
        <title>Nucleocytoplasmic shuttling of the NAD+-dependent histone deacetylase SIRT1.</title>
        <authorList>
            <person name="Tanno M."/>
            <person name="Sakamoto J."/>
            <person name="Miura T."/>
            <person name="Shimamoto K."/>
            <person name="Horio Y."/>
        </authorList>
    </citation>
    <scope>SUBCELLULAR LOCATION</scope>
    <scope>MUTAGENESIS OF 38-ARG-ARG-39; 138-LEU--LEU-145; 227-LYS--LYS-230 AND 425-VAL--ILE-431</scope>
</reference>
<reference key="27">
    <citation type="journal article" date="2007" name="J. Biol. Chem.">
        <title>The direct involvement of SirT1 in insulin-induced insulin receptor substrate-2 tyrosine phosphorylation.</title>
        <authorList>
            <person name="Zhang J."/>
        </authorList>
    </citation>
    <scope>FUNCTION</scope>
    <scope>SUBCELLULAR LOCATION</scope>
    <scope>INTERACTION WITH IRS1 AND IRS2</scope>
</reference>
<reference key="28">
    <citation type="journal article" date="2007" name="Nature">
        <title>SIRT1 regulates the histone methyl-transferase SUV39H1 during heterochromatin formation.</title>
        <authorList>
            <person name="Vaquero A."/>
            <person name="Scher M."/>
            <person name="Erdjument-Bromage H."/>
            <person name="Tempst P."/>
            <person name="Serrano L."/>
            <person name="Reinberg D."/>
        </authorList>
    </citation>
    <scope>FUNCTION</scope>
    <scope>SUBCELLULAR LOCATION</scope>
    <scope>DISRUPTION PHENOTYPE</scope>
</reference>
<reference key="29">
    <citation type="journal article" date="2008" name="Cell">
        <title>SIRT1 regulates circadian clock gene expression through PER2 deacetylation.</title>
        <authorList>
            <person name="Asher G."/>
            <person name="Gatfield D."/>
            <person name="Stratmann M."/>
            <person name="Reinke H."/>
            <person name="Dibner C."/>
            <person name="Kreppel F."/>
            <person name="Mostoslavsky R."/>
            <person name="Alt F.W."/>
            <person name="Schibler U."/>
        </authorList>
    </citation>
    <scope>FUNCTION</scope>
    <scope>SUBCELLULAR LOCATION</scope>
    <scope>INDUCTION</scope>
    <scope>INTERACTION WITH CLOCK; BMAL1 AND PER2</scope>
</reference>
<reference key="30">
    <citation type="journal article" date="2008" name="Cell">
        <title>The NAD+-dependent deacetylase SIRT1 modulates CLOCK-mediated chromatin remodeling and circadian control.</title>
        <authorList>
            <person name="Nakahata Y."/>
            <person name="Kaluzova M."/>
            <person name="Grimaldi B."/>
            <person name="Sahar S."/>
            <person name="Hirayama J."/>
            <person name="Chen D."/>
            <person name="Guarente L.P."/>
            <person name="Sassone-Corsi P."/>
        </authorList>
    </citation>
    <scope>FUNCTION</scope>
    <scope>INDUCTION</scope>
    <scope>INTERACTION WITH CLOCK AND BMAL1</scope>
</reference>
<reference key="31">
    <citation type="journal article" date="2008" name="Dev. Cell">
        <title>Glucose restriction inhibits skeletal myoblast differentiation by activating SIRT1 through AMPK-mediated regulation of Nampt.</title>
        <authorList>
            <person name="Fulco M."/>
            <person name="Cen Y."/>
            <person name="Zhao P."/>
            <person name="Hoffman E.P."/>
            <person name="McBurney M.W."/>
            <person name="Sauve A.A."/>
            <person name="Sartorelli V."/>
        </authorList>
    </citation>
    <scope>FUNCTION</scope>
</reference>
<reference key="32">
    <citation type="journal article" date="2008" name="Exp. Cell Res.">
        <title>sirt1-null mice develop an autoimmune-like condition.</title>
        <authorList>
            <person name="Sequeira J."/>
            <person name="Boily G."/>
            <person name="Bazinet S."/>
            <person name="Saliba S."/>
            <person name="He X."/>
            <person name="Jardine K."/>
            <person name="Kennedy C."/>
            <person name="Staines W."/>
            <person name="Rousseaux C."/>
            <person name="Mueller R."/>
            <person name="McBurney M.W."/>
        </authorList>
    </citation>
    <scope>DISRUPTION PHENOTYPE</scope>
</reference>
<reference key="33">
    <citation type="journal article" date="2008" name="J. Biol. Chem.">
        <title>SIRT1 modulation of the acetylation status, cytosolic localization, and activity of LKB1. Possible role in AMP-activated protein kinase activation.</title>
        <authorList>
            <person name="Lan F."/>
            <person name="Cacicedo J.M."/>
            <person name="Ruderman N."/>
            <person name="Ido Y."/>
        </authorList>
    </citation>
    <scope>FUNCTION IN DEACETYLATION OF STK11</scope>
    <scope>FUNCTION IN POSSIBLE REGULATION OF STK11</scope>
</reference>
<reference key="34">
    <citation type="journal article" date="2008" name="PLoS ONE">
        <title>Sirt1 deficiency attenuates spermatogenesis and germ cell function.</title>
        <authorList>
            <person name="Coussens M."/>
            <person name="Maresh J.G."/>
            <person name="Yanagimachi R."/>
            <person name="Maeda G."/>
            <person name="Allsopp R."/>
        </authorList>
    </citation>
    <scope>DISRUPTION PHENOTYPE</scope>
</reference>
<reference key="35">
    <citation type="journal article" date="2008" name="Proc. Natl. Acad. Sci. U.S.A.">
        <title>A role for the NAD-dependent deacetylase Sirt1 in the regulation of autophagy.</title>
        <authorList>
            <person name="Lee I.H."/>
            <person name="Cao L."/>
            <person name="Mostoslavsky R."/>
            <person name="Lombard D.B."/>
            <person name="Liu J."/>
            <person name="Bruns N.E."/>
            <person name="Tsokos M."/>
            <person name="Alt F.W."/>
            <person name="Finkel T."/>
        </authorList>
    </citation>
    <scope>FUNCTION IN AUTOPHAGY</scope>
</reference>
<reference key="36">
    <citation type="journal article" date="2009" name="Cell Metab.">
        <title>Hepatocyte-specific deletion of SIRT1 alters fatty acid metabolism and results in hepatic steatosis and inflammation.</title>
        <authorList>
            <person name="Purushotham A."/>
            <person name="Schug T.T."/>
            <person name="Xu Q."/>
            <person name="Surapureddi S."/>
            <person name="Guo X."/>
            <person name="Li X."/>
        </authorList>
    </citation>
    <scope>FUNCTION IN REGULATION OF PPARA</scope>
    <scope>INTERACTION WITH PPARA</scope>
</reference>
<reference key="37">
    <citation type="journal article" date="2009" name="J. Biol. Chem.">
        <title>Enzymes in the NAD+ salvage pathway regulate SIRT1 activity at target gene promoters.</title>
        <authorList>
            <person name="Zhang T."/>
            <person name="Berrocal J.G."/>
            <person name="Frizzell K.M."/>
            <person name="Gamble M.J."/>
            <person name="DuMond M.E."/>
            <person name="Krishnakumar R."/>
            <person name="Yang T."/>
            <person name="Sauve A.A."/>
            <person name="Kraus W.L."/>
        </authorList>
    </citation>
    <scope>INTERACTION WITH NMNAT1</scope>
</reference>
<reference key="38">
    <citation type="journal article" date="2009" name="PLoS ONE">
        <title>CK2 is the regulator of SIRT1 substrate-binding affinity, deacetylase activity and cellular response to DNA-damage.</title>
        <authorList>
            <person name="Kang H."/>
            <person name="Jung J.W."/>
            <person name="Kim M.K."/>
            <person name="Chung J.H."/>
        </authorList>
    </citation>
    <scope>PHOSPHORYLATION AT SER-649</scope>
    <scope>MUTAGENESIS OF SER-154; SER-649; SER-651 AND SER-683</scope>
</reference>
<reference key="39">
    <citation type="journal article" date="2009" name="Science">
        <title>Circadian clock feedback cycle through NAMPT-mediated NAD+ biosynthesis.</title>
        <authorList>
            <person name="Ramsey K.M."/>
            <person name="Yoshino J."/>
            <person name="Brace C.S."/>
            <person name="Abrassart D."/>
            <person name="Kobayashi Y."/>
            <person name="Marcheva B."/>
            <person name="Hong H.K."/>
            <person name="Chong J.L."/>
            <person name="Buhr E.D."/>
            <person name="Lee C."/>
            <person name="Takahashi J.S."/>
            <person name="Imai S."/>
            <person name="Bass J."/>
        </authorList>
    </citation>
    <scope>FUNCTION</scope>
    <scope>INTERACTION WITH BMAL1</scope>
</reference>
<reference key="40">
    <citation type="journal article" date="2010" name="Cell">
        <title>A tissue-specific atlas of mouse protein phosphorylation and expression.</title>
        <authorList>
            <person name="Huttlin E.L."/>
            <person name="Jedrychowski M.P."/>
            <person name="Elias J.E."/>
            <person name="Goswami T."/>
            <person name="Rad R."/>
            <person name="Beausoleil S.A."/>
            <person name="Villen J."/>
            <person name="Haas W."/>
            <person name="Sowa M.E."/>
            <person name="Gygi S.P."/>
        </authorList>
    </citation>
    <scope>PHOSPHORYLATION [LARGE SCALE ANALYSIS] AT SER-151 AND SER-154</scope>
    <scope>IDENTIFICATION BY MASS SPECTROMETRY [LARGE SCALE ANALYSIS]</scope>
    <source>
        <tissue>Kidney</tissue>
        <tissue>Lung</tissue>
        <tissue>Spleen</tissue>
        <tissue>Testis</tissue>
    </source>
</reference>
<reference key="41">
    <citation type="journal article" date="2010" name="Cell Metab.">
        <title>SIRT1 deacetylase in POMC neurons is required for homeostatic defenses against diet-induced obesity.</title>
        <authorList>
            <person name="Ramadori G."/>
            <person name="Fujikawa T."/>
            <person name="Fukuda M."/>
            <person name="Anderson J."/>
            <person name="Morgan D.A."/>
            <person name="Mostoslavsky R."/>
            <person name="Stuart R.C."/>
            <person name="Perello M."/>
            <person name="Vianna C.R."/>
            <person name="Nillni E.A."/>
            <person name="Rahmouni K."/>
            <person name="Coppari R."/>
        </authorList>
    </citation>
    <scope>FUNCTION</scope>
    <scope>DISRUPTION PHENOTYPE</scope>
</reference>
<reference key="42">
    <citation type="journal article" date="2010" name="J. Biol. Chem.">
        <title>SIRT1 deacetylates and inhibits SREBP-1C activity in regulation of hepatic lipid metabolism.</title>
        <authorList>
            <person name="Ponugoti B."/>
            <person name="Kim D.H."/>
            <person name="Xiao Z."/>
            <person name="Smith Z."/>
            <person name="Miao J."/>
            <person name="Zang M."/>
            <person name="Wu S.Y."/>
            <person name="Chiang C.M."/>
            <person name="Veenstra T.D."/>
            <person name="Kemper J.K."/>
        </authorList>
    </citation>
    <scope>FUNCTION IN DEACETYLATION OF SREBF1</scope>
    <scope>FUNCTION IN REGULATION OF SREBF1</scope>
</reference>
<reference key="43">
    <citation type="journal article" date="2010" name="J. Cell Biol.">
        <title>SIRT1 contributes to telomere maintenance and augments global homologous recombination.</title>
        <authorList>
            <person name="Palacios J.A."/>
            <person name="Herranz D."/>
            <person name="De Bonis M.L."/>
            <person name="Velasco S."/>
            <person name="Serrano M."/>
            <person name="Blasco M.A."/>
        </authorList>
    </citation>
    <scope>FUNCTION IN TELOMERE MAINTENANCE</scope>
</reference>
<reference key="44">
    <citation type="journal article" date="2010" name="J. Biol. Chem.">
        <title>DYRK1A and DYRK3 promote cell survival through phosphorylation and activation of SIRT1.</title>
        <authorList>
            <person name="Guo X."/>
            <person name="Williams J.G."/>
            <person name="Schug T.T."/>
            <person name="Li X."/>
        </authorList>
    </citation>
    <scope>PHOSPHORYLATION AT THR-522</scope>
    <scope>MUTAGENESIS OF THR-522</scope>
    <scope>FUNCTION</scope>
    <scope>CATALYTIC ACTIVITY</scope>
</reference>
<reference key="45">
    <citation type="journal article" date="2010" name="Nat. Cell Biol.">
        <title>GAPDH mediates nitrosylation of nuclear proteins.</title>
        <authorList>
            <person name="Kornberg M.D."/>
            <person name="Sen N."/>
            <person name="Hara M.R."/>
            <person name="Juluri K.R."/>
            <person name="Nguyen J.V."/>
            <person name="Snowman A.M."/>
            <person name="Law L."/>
            <person name="Hester L.D."/>
            <person name="Snyder S.H."/>
        </authorList>
    </citation>
    <scope>S-NITROSYLATION AT CYS-387 AND CYS-390</scope>
    <scope>MUTAGENESIS OF CYS-363; CYS-366; CYS-387 AND CYS-390</scope>
</reference>
<reference key="46">
    <citation type="journal article" date="2010" name="PLoS ONE">
        <title>KRIT1 regulates the homeostasis of intracellular reactive oxygen species.</title>
        <authorList>
            <person name="Goitre L."/>
            <person name="Balzac F."/>
            <person name="Degani S."/>
            <person name="Degan P."/>
            <person name="Marchi S."/>
            <person name="Pinton P."/>
            <person name="Retta S.F."/>
        </authorList>
    </citation>
    <scope>INTERACTION WITH FOXO1</scope>
</reference>
<reference key="47">
    <citation type="journal article" date="2010" name="PLoS ONE">
        <title>SIRT1 undergoes alternative splicing in a novel auto-regulatory loop with p53.</title>
        <authorList>
            <person name="Lynch C.J."/>
            <person name="Shah Z.H."/>
            <person name="Allison S.J."/>
            <person name="Ahmed S.U."/>
            <person name="Ford J."/>
            <person name="Warnock L.J."/>
            <person name="Li H."/>
            <person name="Serrano M."/>
            <person name="Milner J."/>
        </authorList>
    </citation>
    <scope>ALTERNATIVE SPLICING (ISOFORM 2)</scope>
</reference>
<reference key="48">
    <citation type="journal article" date="2011" name="Aging Cell">
        <title>A nutrient-sensitive interaction between Sirt1 and HNF-1alpha regulates Crp expression.</title>
        <authorList>
            <person name="Grimm A.A."/>
            <person name="Brace C.S."/>
            <person name="Wang T."/>
            <person name="Stormo G.D."/>
            <person name="Imai S."/>
        </authorList>
    </citation>
    <scope>FUNCTION</scope>
    <scope>INTERACTION WITH HNF1A</scope>
</reference>
<reference key="49">
    <citation type="journal article" date="2011" name="Biochem. J.">
        <title>Regulation of unfolded protein response modulator XBP1s by acetylation and deacetylation.</title>
        <authorList>
            <person name="Wang F.M."/>
            <person name="Chen Y.J."/>
            <person name="Ouyang H.J."/>
        </authorList>
    </citation>
    <scope>FUNCTION IN DEACETYLATION OF XBP1</scope>
    <scope>SUBCELLULAR LOCATION</scope>
</reference>
<reference key="50">
    <citation type="journal article" date="2011" name="Cancer Res.">
        <title>Disruption of a Sirt1-dependent autophagy checkpoint in the prostate results in prostatic intraepithelial neoplasia lesion formation.</title>
        <authorList>
            <person name="Powell M.J."/>
            <person name="Casimiro M.C."/>
            <person name="Cordon-Cardo C."/>
            <person name="He X."/>
            <person name="Yeow W.S."/>
            <person name="Wang C."/>
            <person name="McCue P.A."/>
            <person name="McBurney M.W."/>
            <person name="Pestell R.G."/>
        </authorList>
    </citation>
    <scope>FUNCTION IN AUTOPHAGY</scope>
    <scope>DISRUPTION PHENOTYPE</scope>
</reference>
<reference key="51">
    <citation type="journal article" date="2011" name="Cardiovasc. Res.">
        <title>MicroRNA-195 promotes palmitate-induced apoptosis in cardiomyocytes by down-regulating Sirt1.</title>
        <authorList>
            <person name="Zhu H."/>
            <person name="Yang Y."/>
            <person name="Wang Y."/>
            <person name="Li J."/>
            <person name="Schiller P.W."/>
            <person name="Peng T."/>
        </authorList>
    </citation>
    <scope>FUNCTION IN PALMITATE-INDUCED APOPTOSIS</scope>
    <scope>INDUCTION</scope>
    <scope>DOWN-REGULATION BY PALMITATE</scope>
</reference>
<reference key="52">
    <citation type="journal article" date="2012" name="EMBO J.">
        <title>Novel repressor regulates insulin sensitivity through interaction with Foxo1.</title>
        <authorList>
            <person name="Nakae J."/>
            <person name="Cao Y."/>
            <person name="Hakuno F."/>
            <person name="Takemori H."/>
            <person name="Kawano Y."/>
            <person name="Sekioka R."/>
            <person name="Abe T."/>
            <person name="Kiyonari H."/>
            <person name="Tanaka T."/>
            <person name="Sakai J."/>
            <person name="Takahashi S."/>
            <person name="Itoh H."/>
        </authorList>
    </citation>
    <scope>INTERACTION WITH FOXO1</scope>
</reference>
<reference key="53">
    <citation type="journal article" date="2012" name="Mol. Cell">
        <title>The deacetylase Sirt6 activates the acetyltransferase GCN5 and suppresses hepatic gluconeogenesis.</title>
        <authorList>
            <person name="Dominy J.E. Jr."/>
            <person name="Lee Y."/>
            <person name="Jedrychowski M.P."/>
            <person name="Chim H."/>
            <person name="Jurczak M.J."/>
            <person name="Camporez J.P."/>
            <person name="Ruan H.B."/>
            <person name="Feldman J."/>
            <person name="Pierce K."/>
            <person name="Mostoslavsky R."/>
            <person name="Denu J.M."/>
            <person name="Clish C.B."/>
            <person name="Yang X."/>
            <person name="Shulman G.I."/>
            <person name="Gygi S.P."/>
            <person name="Puigserver P."/>
        </authorList>
    </citation>
    <scope>FUNCTION IN DEACETYLATION OF PPARGC1A</scope>
</reference>
<reference key="54">
    <citation type="journal article" date="2012" name="Nat. Neurosci.">
        <title>BCL6 controls neurogenesis through Sirt1-dependent epigenetic repression of selective Notch targets.</title>
        <authorList>
            <person name="Tiberi L."/>
            <person name="van den Ameele J."/>
            <person name="Dimidschstein J."/>
            <person name="Piccirilli J."/>
            <person name="Gall D."/>
            <person name="Herpoel A."/>
            <person name="Bilheu A."/>
            <person name="Bonnefont J."/>
            <person name="Iacovino M."/>
            <person name="Kyba M."/>
            <person name="Bouschet T."/>
            <person name="Vanderhaeghen P."/>
        </authorList>
    </citation>
    <scope>FUNCTION IN NEUROGENESIS</scope>
    <scope>INTERACTION WITH BCL6</scope>
</reference>
<reference key="55">
    <citation type="journal article" date="2016" name="Aging Cell">
        <title>Acetylation reduces SOX9 nuclear entry and ACAN gene transactivation in human chondrocytes.</title>
        <authorList>
            <person name="Bar Oz M."/>
            <person name="Kumar A."/>
            <person name="Elayyan J."/>
            <person name="Reich E."/>
            <person name="Binyamin M."/>
            <person name="Kandel L."/>
            <person name="Liebergall M."/>
            <person name="Steinmeyer J."/>
            <person name="Lefebvre V."/>
            <person name="Dvir-Ginzberg M."/>
        </authorList>
    </citation>
    <scope>FUNCTION</scope>
</reference>
<reference key="56">
    <citation type="journal article" date="2017" name="Biochem. Biophys. Res. Commun.">
        <title>Sirt7 stabilizes rDNA heterochromatin through recruitment of DNMT1 and Sirt1.</title>
        <authorList>
            <person name="Ianni A."/>
            <person name="Hoelper S."/>
            <person name="Krueger M."/>
            <person name="Braun T."/>
            <person name="Bober E."/>
        </authorList>
    </citation>
    <scope>INTERACTION WITH SIRT7</scope>
</reference>
<reference key="57">
    <citation type="journal article" date="2017" name="J. Cell Sci.">
        <title>Lipopolysaccharide modulates p300 and Sirt1 to promote PRMT1 stability via an SCFFbxl17-recognized acetyldegron.</title>
        <authorList>
            <person name="Lai Y."/>
            <person name="Li J."/>
            <person name="Li X."/>
            <person name="Zou C."/>
        </authorList>
    </citation>
    <scope>FUNCTION</scope>
    <scope>CATALYTIC ACTIVITY</scope>
</reference>
<reference key="58">
    <citation type="journal article" date="2017" name="Proc. Natl. Acad. Sci. U.S.A.">
        <title>Sirt7 promotes adipogenesis in the mouse by inhibiting autocatalytic activation of Sirt1.</title>
        <authorList>
            <person name="Fang J."/>
            <person name="Ianni A."/>
            <person name="Smolka C."/>
            <person name="Vakhrusheva O."/>
            <person name="Nolte H."/>
            <person name="Krueger M."/>
            <person name="Wietelmann A."/>
            <person name="Simonet N.G."/>
            <person name="Adrian-Segarra J.M."/>
            <person name="Vaquero A."/>
            <person name="Braun T."/>
            <person name="Bober E."/>
        </authorList>
    </citation>
    <scope>FUNCTION</scope>
    <scope>CATALYTIC ACTIVITY</scope>
    <scope>ACETYLATION AT LYS-230; LYS-369; LYS-422; LYS-505 AND LYS-600</scope>
    <scope>MUTAGENESIS OF LYS-230; LYS-369; LYS-505 AND LYS-600</scope>
</reference>
<reference key="59">
    <citation type="journal article" date="2018" name="Mol. Cell">
        <title>Dynamic acetylation of phosphoenolpyruvate carboxykinase toggles enzyme activity between gluconeogenic and anaplerotic reactions.</title>
        <authorList>
            <person name="Latorre-Muro P."/>
            <person name="Baeza J."/>
            <person name="Armstrong E.A."/>
            <person name="Hurtado-Guerrero R."/>
            <person name="Corzana F."/>
            <person name="Wu L.E."/>
            <person name="Sinclair D.A."/>
            <person name="Lopez-Buesa P."/>
            <person name="Carrodeguas J.A."/>
            <person name="Denu J.M."/>
        </authorList>
    </citation>
    <scope>FUNCTION IN DEACETYLATION OF PCK1</scope>
</reference>
<reference key="60">
    <citation type="journal article" date="2018" name="Nat. Commun.">
        <title>SIRT7 has a critical role in bone formation by regulating lysine acylation of SP7/Osterix.</title>
        <authorList>
            <person name="Fukuda M."/>
            <person name="Yoshizawa T."/>
            <person name="Karim M.F."/>
            <person name="Sobuz S.U."/>
            <person name="Korogi W."/>
            <person name="Kobayasi D."/>
            <person name="Okanishi H."/>
            <person name="Tasaki M."/>
            <person name="Ono K."/>
            <person name="Sawa T."/>
            <person name="Sato Y."/>
            <person name="Chirifu M."/>
            <person name="Masuda T."/>
            <person name="Nakamura T."/>
            <person name="Tanoue H."/>
            <person name="Nakashima K."/>
            <person name="Kobashigawa Y."/>
            <person name="Morioka H."/>
            <person name="Bober E."/>
            <person name="Ohtsuki S."/>
            <person name="Yamagata Y."/>
            <person name="Ando Y."/>
            <person name="Oike Y."/>
            <person name="Araki N."/>
            <person name="Takeda S."/>
            <person name="Mizuta H."/>
            <person name="Yamagata K."/>
        </authorList>
    </citation>
    <scope>FUNCTION</scope>
    <scope>CATALYTIC ACTIVITY</scope>
</reference>